<reference key="1">
    <citation type="journal article" date="1986" name="Nucleic Acids Res.">
        <title>Isolation of human glucose-6-phosphate dehydrogenase (G6PD) cDNA clones: primary structure of the protein and unusual 5' non-coding region.</title>
        <authorList>
            <person name="Persico M.G."/>
            <person name="Viglietto G."/>
            <person name="Martini G."/>
            <person name="Toniolo D."/>
            <person name="Paonessa G."/>
            <person name="Moscatelli C."/>
            <person name="Dono R."/>
            <person name="Vulliamy T.J."/>
            <person name="Luzzatto L."/>
            <person name="D'Urso M."/>
        </authorList>
    </citation>
    <scope>NUCLEOTIDE SEQUENCE [MRNA] (ISOFORM SHORT)</scope>
</reference>
<reference key="2">
    <citation type="journal article" date="1986" name="EMBO J.">
        <title>Structural analysis of the X-linked gene encoding human glucose 6-phosphate dehydrogenase.</title>
        <authorList>
            <person name="Martini G."/>
            <person name="Toniolo D."/>
            <person name="Vulliamy T."/>
            <person name="Luzzatto L."/>
            <person name="Dono R."/>
            <person name="Viglietto G."/>
            <person name="Paonessa G."/>
            <person name="D'Urso M."/>
            <person name="Persico M.G."/>
        </authorList>
    </citation>
    <scope>NUCLEOTIDE SEQUENCE [GENOMIC DNA]</scope>
</reference>
<reference key="3">
    <citation type="journal article" date="1988" name="Proc. Natl. Acad. Sci. U.S.A.">
        <title>Molecular cloning and nucleotide sequence of cDNA for human glucose-6-phosphate dehydrogenase variant A(-).</title>
        <authorList>
            <person name="Hirono A."/>
            <person name="Beutler E."/>
        </authorList>
    </citation>
    <scope>NUCLEOTIDE SEQUENCE [MRNA] (ISOFORM SHORT)</scope>
    <scope>PARTIAL NUCLEOTIDE SEQUENCE [MRNA] (ISOFORM LONG)</scope>
    <scope>VARIANT CNSHA1 MET-68</scope>
    <scope>VARIANT ASP-126</scope>
</reference>
<reference key="4">
    <citation type="journal article" date="1991" name="Genomics">
        <title>Sequence of human glucose-6-phosphate dehydrogenase cloned in plasmids and a yeast artificial chromosome.</title>
        <authorList>
            <person name="Chen E.Y."/>
            <person name="Cheng A."/>
            <person name="Lee A."/>
            <person name="Kuang W."/>
            <person name="Hillier L."/>
            <person name="Green P."/>
            <person name="Schlessinger D."/>
            <person name="Ciccodicola A."/>
            <person name="D'Urso M."/>
        </authorList>
    </citation>
    <scope>NUCLEOTIDE SEQUENCE [GENOMIC DNA]</scope>
    <scope>VARIANT CNSHA1 MET-68</scope>
    <scope>VARIANT ASP-126</scope>
</reference>
<reference key="5">
    <citation type="journal article" date="1996" name="Hum. Mol. Genet.">
        <title>Long-range sequence analysis in Xq28: thirteen known and six candidate genes in 219.4 kb of high GC DNA between the RCP/GCP and G6PD loci.</title>
        <authorList>
            <person name="Chen E.Y."/>
            <person name="Zollo M."/>
            <person name="Mazzarella R.A."/>
            <person name="Ciccodicola A."/>
            <person name="Chen C.-N."/>
            <person name="Zuo L."/>
            <person name="Heiner C."/>
            <person name="Burough F.W."/>
            <person name="Ripetto M."/>
            <person name="Schlessinger D."/>
            <person name="D'Urso M."/>
        </authorList>
    </citation>
    <scope>NUCLEOTIDE SEQUENCE [GENOMIC DNA]</scope>
    <scope>VARIANT CNSHA1 MET-68</scope>
    <scope>VARIANT ASP-126</scope>
</reference>
<reference key="6">
    <citation type="journal article" date="2005" name="Nature">
        <title>The DNA sequence of the human X chromosome.</title>
        <authorList>
            <person name="Ross M.T."/>
            <person name="Grafham D.V."/>
            <person name="Coffey A.J."/>
            <person name="Scherer S."/>
            <person name="McLay K."/>
            <person name="Muzny D."/>
            <person name="Platzer M."/>
            <person name="Howell G.R."/>
            <person name="Burrows C."/>
            <person name="Bird C.P."/>
            <person name="Frankish A."/>
            <person name="Lovell F.L."/>
            <person name="Howe K.L."/>
            <person name="Ashurst J.L."/>
            <person name="Fulton R.S."/>
            <person name="Sudbrak R."/>
            <person name="Wen G."/>
            <person name="Jones M.C."/>
            <person name="Hurles M.E."/>
            <person name="Andrews T.D."/>
            <person name="Scott C.E."/>
            <person name="Searle S."/>
            <person name="Ramser J."/>
            <person name="Whittaker A."/>
            <person name="Deadman R."/>
            <person name="Carter N.P."/>
            <person name="Hunt S.E."/>
            <person name="Chen R."/>
            <person name="Cree A."/>
            <person name="Gunaratne P."/>
            <person name="Havlak P."/>
            <person name="Hodgson A."/>
            <person name="Metzker M.L."/>
            <person name="Richards S."/>
            <person name="Scott G."/>
            <person name="Steffen D."/>
            <person name="Sodergren E."/>
            <person name="Wheeler D.A."/>
            <person name="Worley K.C."/>
            <person name="Ainscough R."/>
            <person name="Ambrose K.D."/>
            <person name="Ansari-Lari M.A."/>
            <person name="Aradhya S."/>
            <person name="Ashwell R.I."/>
            <person name="Babbage A.K."/>
            <person name="Bagguley C.L."/>
            <person name="Ballabio A."/>
            <person name="Banerjee R."/>
            <person name="Barker G.E."/>
            <person name="Barlow K.F."/>
            <person name="Barrett I.P."/>
            <person name="Bates K.N."/>
            <person name="Beare D.M."/>
            <person name="Beasley H."/>
            <person name="Beasley O."/>
            <person name="Beck A."/>
            <person name="Bethel G."/>
            <person name="Blechschmidt K."/>
            <person name="Brady N."/>
            <person name="Bray-Allen S."/>
            <person name="Bridgeman A.M."/>
            <person name="Brown A.J."/>
            <person name="Brown M.J."/>
            <person name="Bonnin D."/>
            <person name="Bruford E.A."/>
            <person name="Buhay C."/>
            <person name="Burch P."/>
            <person name="Burford D."/>
            <person name="Burgess J."/>
            <person name="Burrill W."/>
            <person name="Burton J."/>
            <person name="Bye J.M."/>
            <person name="Carder C."/>
            <person name="Carrel L."/>
            <person name="Chako J."/>
            <person name="Chapman J.C."/>
            <person name="Chavez D."/>
            <person name="Chen E."/>
            <person name="Chen G."/>
            <person name="Chen Y."/>
            <person name="Chen Z."/>
            <person name="Chinault C."/>
            <person name="Ciccodicola A."/>
            <person name="Clark S.Y."/>
            <person name="Clarke G."/>
            <person name="Clee C.M."/>
            <person name="Clegg S."/>
            <person name="Clerc-Blankenburg K."/>
            <person name="Clifford K."/>
            <person name="Cobley V."/>
            <person name="Cole C.G."/>
            <person name="Conquer J.S."/>
            <person name="Corby N."/>
            <person name="Connor R.E."/>
            <person name="David R."/>
            <person name="Davies J."/>
            <person name="Davis C."/>
            <person name="Davis J."/>
            <person name="Delgado O."/>
            <person name="Deshazo D."/>
            <person name="Dhami P."/>
            <person name="Ding Y."/>
            <person name="Dinh H."/>
            <person name="Dodsworth S."/>
            <person name="Draper H."/>
            <person name="Dugan-Rocha S."/>
            <person name="Dunham A."/>
            <person name="Dunn M."/>
            <person name="Durbin K.J."/>
            <person name="Dutta I."/>
            <person name="Eades T."/>
            <person name="Ellwood M."/>
            <person name="Emery-Cohen A."/>
            <person name="Errington H."/>
            <person name="Evans K.L."/>
            <person name="Faulkner L."/>
            <person name="Francis F."/>
            <person name="Frankland J."/>
            <person name="Fraser A.E."/>
            <person name="Galgoczy P."/>
            <person name="Gilbert J."/>
            <person name="Gill R."/>
            <person name="Gloeckner G."/>
            <person name="Gregory S.G."/>
            <person name="Gribble S."/>
            <person name="Griffiths C."/>
            <person name="Grocock R."/>
            <person name="Gu Y."/>
            <person name="Gwilliam R."/>
            <person name="Hamilton C."/>
            <person name="Hart E.A."/>
            <person name="Hawes A."/>
            <person name="Heath P.D."/>
            <person name="Heitmann K."/>
            <person name="Hennig S."/>
            <person name="Hernandez J."/>
            <person name="Hinzmann B."/>
            <person name="Ho S."/>
            <person name="Hoffs M."/>
            <person name="Howden P.J."/>
            <person name="Huckle E.J."/>
            <person name="Hume J."/>
            <person name="Hunt P.J."/>
            <person name="Hunt A.R."/>
            <person name="Isherwood J."/>
            <person name="Jacob L."/>
            <person name="Johnson D."/>
            <person name="Jones S."/>
            <person name="de Jong P.J."/>
            <person name="Joseph S.S."/>
            <person name="Keenan S."/>
            <person name="Kelly S."/>
            <person name="Kershaw J.K."/>
            <person name="Khan Z."/>
            <person name="Kioschis P."/>
            <person name="Klages S."/>
            <person name="Knights A.J."/>
            <person name="Kosiura A."/>
            <person name="Kovar-Smith C."/>
            <person name="Laird G.K."/>
            <person name="Langford C."/>
            <person name="Lawlor S."/>
            <person name="Leversha M."/>
            <person name="Lewis L."/>
            <person name="Liu W."/>
            <person name="Lloyd C."/>
            <person name="Lloyd D.M."/>
            <person name="Loulseged H."/>
            <person name="Loveland J.E."/>
            <person name="Lovell J.D."/>
            <person name="Lozado R."/>
            <person name="Lu J."/>
            <person name="Lyne R."/>
            <person name="Ma J."/>
            <person name="Maheshwari M."/>
            <person name="Matthews L.H."/>
            <person name="McDowall J."/>
            <person name="McLaren S."/>
            <person name="McMurray A."/>
            <person name="Meidl P."/>
            <person name="Meitinger T."/>
            <person name="Milne S."/>
            <person name="Miner G."/>
            <person name="Mistry S.L."/>
            <person name="Morgan M."/>
            <person name="Morris S."/>
            <person name="Mueller I."/>
            <person name="Mullikin J.C."/>
            <person name="Nguyen N."/>
            <person name="Nordsiek G."/>
            <person name="Nyakatura G."/>
            <person name="O'dell C.N."/>
            <person name="Okwuonu G."/>
            <person name="Palmer S."/>
            <person name="Pandian R."/>
            <person name="Parker D."/>
            <person name="Parrish J."/>
            <person name="Pasternak S."/>
            <person name="Patel D."/>
            <person name="Pearce A.V."/>
            <person name="Pearson D.M."/>
            <person name="Pelan S.E."/>
            <person name="Perez L."/>
            <person name="Porter K.M."/>
            <person name="Ramsey Y."/>
            <person name="Reichwald K."/>
            <person name="Rhodes S."/>
            <person name="Ridler K.A."/>
            <person name="Schlessinger D."/>
            <person name="Schueler M.G."/>
            <person name="Sehra H.K."/>
            <person name="Shaw-Smith C."/>
            <person name="Shen H."/>
            <person name="Sheridan E.M."/>
            <person name="Shownkeen R."/>
            <person name="Skuce C.D."/>
            <person name="Smith M.L."/>
            <person name="Sotheran E.C."/>
            <person name="Steingruber H.E."/>
            <person name="Steward C.A."/>
            <person name="Storey R."/>
            <person name="Swann R.M."/>
            <person name="Swarbreck D."/>
            <person name="Tabor P.E."/>
            <person name="Taudien S."/>
            <person name="Taylor T."/>
            <person name="Teague B."/>
            <person name="Thomas K."/>
            <person name="Thorpe A."/>
            <person name="Timms K."/>
            <person name="Tracey A."/>
            <person name="Trevanion S."/>
            <person name="Tromans A.C."/>
            <person name="d'Urso M."/>
            <person name="Verduzco D."/>
            <person name="Villasana D."/>
            <person name="Waldron L."/>
            <person name="Wall M."/>
            <person name="Wang Q."/>
            <person name="Warren J."/>
            <person name="Warry G.L."/>
            <person name="Wei X."/>
            <person name="West A."/>
            <person name="Whitehead S.L."/>
            <person name="Whiteley M.N."/>
            <person name="Wilkinson J.E."/>
            <person name="Willey D.L."/>
            <person name="Williams G."/>
            <person name="Williams L."/>
            <person name="Williamson A."/>
            <person name="Williamson H."/>
            <person name="Wilming L."/>
            <person name="Woodmansey R.L."/>
            <person name="Wray P.W."/>
            <person name="Yen J."/>
            <person name="Zhang J."/>
            <person name="Zhou J."/>
            <person name="Zoghbi H."/>
            <person name="Zorilla S."/>
            <person name="Buck D."/>
            <person name="Reinhardt R."/>
            <person name="Poustka A."/>
            <person name="Rosenthal A."/>
            <person name="Lehrach H."/>
            <person name="Meindl A."/>
            <person name="Minx P.J."/>
            <person name="Hillier L.W."/>
            <person name="Willard H.F."/>
            <person name="Wilson R.K."/>
            <person name="Waterston R.H."/>
            <person name="Rice C.M."/>
            <person name="Vaudin M."/>
            <person name="Coulson A."/>
            <person name="Nelson D.L."/>
            <person name="Weinstock G."/>
            <person name="Sulston J.E."/>
            <person name="Durbin R.M."/>
            <person name="Hubbard T."/>
            <person name="Gibbs R.A."/>
            <person name="Beck S."/>
            <person name="Rogers J."/>
            <person name="Bentley D.R."/>
        </authorList>
    </citation>
    <scope>NUCLEOTIDE SEQUENCE [LARGE SCALE GENOMIC DNA]</scope>
</reference>
<reference key="7">
    <citation type="submission" date="2005-09" db="EMBL/GenBank/DDBJ databases">
        <authorList>
            <person name="Mural R.J."/>
            <person name="Istrail S."/>
            <person name="Sutton G.G."/>
            <person name="Florea L."/>
            <person name="Halpern A.L."/>
            <person name="Mobarry C.M."/>
            <person name="Lippert R."/>
            <person name="Walenz B."/>
            <person name="Shatkay H."/>
            <person name="Dew I."/>
            <person name="Miller J.R."/>
            <person name="Flanigan M.J."/>
            <person name="Edwards N.J."/>
            <person name="Bolanos R."/>
            <person name="Fasulo D."/>
            <person name="Halldorsson B.V."/>
            <person name="Hannenhalli S."/>
            <person name="Turner R."/>
            <person name="Yooseph S."/>
            <person name="Lu F."/>
            <person name="Nusskern D.R."/>
            <person name="Shue B.C."/>
            <person name="Zheng X.H."/>
            <person name="Zhong F."/>
            <person name="Delcher A.L."/>
            <person name="Huson D.H."/>
            <person name="Kravitz S.A."/>
            <person name="Mouchard L."/>
            <person name="Reinert K."/>
            <person name="Remington K.A."/>
            <person name="Clark A.G."/>
            <person name="Waterman M.S."/>
            <person name="Eichler E.E."/>
            <person name="Adams M.D."/>
            <person name="Hunkapiller M.W."/>
            <person name="Myers E.W."/>
            <person name="Venter J.C."/>
        </authorList>
    </citation>
    <scope>NUCLEOTIDE SEQUENCE [LARGE SCALE GENOMIC DNA]</scope>
</reference>
<reference key="8">
    <citation type="journal article" date="2004" name="Genome Res.">
        <title>The status, quality, and expansion of the NIH full-length cDNA project: the Mammalian Gene Collection (MGC).</title>
        <authorList>
            <consortium name="The MGC Project Team"/>
        </authorList>
    </citation>
    <scope>NUCLEOTIDE SEQUENCE [LARGE SCALE MRNA] (ISOFORM SHORT)</scope>
    <source>
        <tissue>Lung</tissue>
    </source>
</reference>
<reference key="9">
    <citation type="journal article" date="1989" name="Cell">
        <title>Two structural genes on different chromosomes are required for encoding the major subunit of human red cell glucose-6-phosphate dehydrogenase.</title>
        <authorList>
            <person name="Kanno H."/>
            <person name="Huang I.Y."/>
            <person name="Kan Y.W."/>
            <person name="Yoshida A."/>
        </authorList>
    </citation>
    <scope>NUCLEOTIDE SEQUENCE [MRNA] OF 1-71</scope>
</reference>
<reference key="10">
    <citation type="journal article" date="1993" name="DNA Cell Biol.">
        <title>5' structure and expression of human glucose-6-phosphate dehydrogenase mRNA.</title>
        <authorList>
            <person name="Kanno H."/>
            <person name="Kondoh T."/>
            <person name="Yoshida A."/>
        </authorList>
    </citation>
    <scope>NUCLEOTIDE SEQUENCE [MRNA] OF 1-71 (ISOFORM 3)</scope>
</reference>
<reference key="11">
    <citation type="journal article" date="1991" name="Gene">
        <title>The CpG island in the 5' region of the G6PD gene of man and mouse.</title>
        <authorList>
            <person name="Toniolo D."/>
            <person name="Filippi M."/>
            <person name="Dono R."/>
            <person name="Lettieri T."/>
            <person name="Martini G."/>
        </authorList>
    </citation>
    <scope>NUCLEOTIDE SEQUENCE [GENOMIC DNA] OF 1-15</scope>
</reference>
<reference key="12">
    <citation type="journal article" date="2003" name="Nat. Biotechnol.">
        <title>Exploring proteomes and analyzing protein processing by mass spectrometric identification of sorted N-terminal peptides.</title>
        <authorList>
            <person name="Gevaert K."/>
            <person name="Goethals M."/>
            <person name="Martens L."/>
            <person name="Van Damme J."/>
            <person name="Staes A."/>
            <person name="Thomas G.R."/>
            <person name="Vandekerckhove J."/>
        </authorList>
    </citation>
    <scope>PROTEIN SEQUENCE OF 2-9</scope>
    <source>
        <tissue>Platelet</tissue>
    </source>
</reference>
<reference key="13">
    <citation type="journal article" date="1991" name="Nucleic Acids Res.">
        <title>A to G substitution identified in exon 2 of the G6PD gene among G6PD deficient Chinese.</title>
        <authorList>
            <person name="Chao L.T."/>
            <person name="Du C.S."/>
            <person name="Louie E."/>
            <person name="Zuo L."/>
            <person name="Chen E."/>
            <person name="Lubin B."/>
            <person name="Chiu D.T."/>
        </authorList>
    </citation>
    <scope>NUCLEOTIDE SEQUENCE [GENOMIC DNA] OF 30-34</scope>
    <scope>VARIANT CNSHA1 ARG-32</scope>
</reference>
<reference key="14">
    <citation type="journal article" date="2002" name="Genetics">
        <title>Nucleotide variability at G6pd and the signature of malarial selection in humans.</title>
        <authorList>
            <person name="Saunders M.A."/>
            <person name="Hammer M.F."/>
            <person name="Nachman M.W."/>
        </authorList>
    </citation>
    <scope>NUCLEOTIDE SEQUENCE [GENOMIC DNA] OF 41-515 (ISOFORM SHORT)</scope>
    <scope>VARIANT CNSHA1 MET-68</scope>
    <scope>VARIANT ASP-126</scope>
</reference>
<reference key="15">
    <citation type="journal article" date="1986" name="Proc. Natl. Acad. Sci. U.S.A.">
        <title>Human glucose-6-phosphate dehydrogenase: primary structure and cDNA cloning.</title>
        <authorList>
            <person name="Takizawa T."/>
            <person name="Huang I.-Y."/>
            <person name="Ikuta T."/>
            <person name="Yoshida A."/>
        </authorList>
    </citation>
    <scope>NUCLEOTIDE SEQUENCE [MRNA] OF 154-515 (ISOFORM SHORT)</scope>
</reference>
<reference key="16">
    <citation type="journal article" date="1988" name="Eur. J. Biochem.">
        <title>Human erythrocyte glucose-6-phosphate dehydrogenase. Identification of a reactive lysyl residue labelled with pyridoxal 5'-phosphate.</title>
        <authorList>
            <person name="Camardella L."/>
            <person name="Caruso C."/>
            <person name="Rutigliano B."/>
            <person name="Romano M."/>
            <person name="di Prisco G."/>
            <person name="Descalzi-Cancedda F."/>
        </authorList>
    </citation>
    <scope>PROTEIN SEQUENCE OF 199-215</scope>
</reference>
<reference key="17">
    <citation type="journal article" date="1984" name="Biochem. Biophys. Res. Commun.">
        <title>Amino acid sequence of the carboxy-terminal end of human erythrocyte glucose-6-phosphate dehydrogenase.</title>
        <authorList>
            <person name="Descalzi-Cancedda F."/>
            <person name="Caruso C."/>
            <person name="Romano M."/>
            <person name="di Prisco G."/>
            <person name="Camardella L."/>
        </authorList>
    </citation>
    <scope>PROTEIN SEQUENCE OF 509-515</scope>
</reference>
<reference key="18">
    <citation type="journal article" date="1978" name="Biochem. Biophys. Res. Commun.">
        <title>Glucose 6-phosphate dehydrogenase activity in membranes of erythrocytes from normal individuals and subjects with Mediterranean G6PD deficiency.</title>
        <authorList>
            <person name="Benatti U."/>
            <person name="Morelli A."/>
            <person name="Frascio M."/>
            <person name="Melloni E."/>
            <person name="Salamino F."/>
            <person name="Sparatore B."/>
            <person name="Pontremoli S."/>
            <person name="De Flora A."/>
        </authorList>
    </citation>
    <scope>FUNCTION</scope>
    <scope>CATALYTIC ACTIVITY</scope>
    <scope>PATHWAY</scope>
    <scope>SUBCELLULAR LOCATION</scope>
</reference>
<reference key="19">
    <citation type="journal article" date="1989" name="J. Clin. Invest.">
        <title>Alternative splicing of human glucose-6-phosphate dehydrogenase messenger RNA in different tissues.</title>
        <authorList>
            <person name="Hirono A."/>
            <person name="Beutler E."/>
        </authorList>
    </citation>
    <scope>ALTERNATIVE SPLICING</scope>
</reference>
<reference key="20">
    <citation type="journal article" date="1995" name="Biochem. Biophys. Res. Commun.">
        <title>Glucose 6-phosphate dehydrogenase from human erythrocytes: identification of N-acetyl-alanine at the N-terminus of the mature protein.</title>
        <authorList>
            <person name="Camardella L."/>
            <person name="Damonte G."/>
            <person name="Carratore V."/>
            <person name="Benatti U."/>
            <person name="Tonetti M."/>
            <person name="Moneti G."/>
        </authorList>
    </citation>
    <scope>ACETYLATION AT ALA-2</scope>
    <scope>IDENTIFICATION BY MASS SPECTROMETRY</scope>
</reference>
<reference key="21">
    <citation type="journal article" date="2008" name="Proc. Natl. Acad. Sci. U.S.A.">
        <title>A quantitative atlas of mitotic phosphorylation.</title>
        <authorList>
            <person name="Dephoure N."/>
            <person name="Zhou C."/>
            <person name="Villen J."/>
            <person name="Beausoleil S.A."/>
            <person name="Bakalarski C.E."/>
            <person name="Elledge S.J."/>
            <person name="Gygi S.P."/>
        </authorList>
    </citation>
    <scope>PHOSPHORYLATION [LARGE SCALE ANALYSIS] AT SER-26 (ISOFORM 3)</scope>
    <scope>IDENTIFICATION BY MASS SPECTROMETRY [LARGE SCALE ANALYSIS]</scope>
    <source>
        <tissue>Cervix carcinoma</tissue>
    </source>
</reference>
<reference key="22">
    <citation type="journal article" date="2009" name="Anal. Chem.">
        <title>Lys-N and trypsin cover complementary parts of the phosphoproteome in a refined SCX-based approach.</title>
        <authorList>
            <person name="Gauci S."/>
            <person name="Helbig A.O."/>
            <person name="Slijper M."/>
            <person name="Krijgsveld J."/>
            <person name="Heck A.J."/>
            <person name="Mohammed S."/>
        </authorList>
    </citation>
    <scope>ACETYLATION [LARGE SCALE ANALYSIS] AT ALA-2</scope>
    <scope>CLEAVAGE OF INITIATOR METHIONINE [LARGE SCALE ANALYSIS]</scope>
    <scope>IDENTIFICATION BY MASS SPECTROMETRY [LARGE SCALE ANALYSIS]</scope>
</reference>
<reference key="23">
    <citation type="journal article" date="2009" name="Science">
        <title>Lysine acetylation targets protein complexes and co-regulates major cellular functions.</title>
        <authorList>
            <person name="Choudhary C."/>
            <person name="Kumar C."/>
            <person name="Gnad F."/>
            <person name="Nielsen M.L."/>
            <person name="Rehman M."/>
            <person name="Walther T.C."/>
            <person name="Olsen J.V."/>
            <person name="Mann M."/>
        </authorList>
    </citation>
    <scope>ACETYLATION [LARGE SCALE ANALYSIS] AT LYS-89; LYS-171; LYS-403; LYS-432 AND LYS-497</scope>
    <scope>IDENTIFICATION BY MASS SPECTROMETRY [LARGE SCALE ANALYSIS]</scope>
</reference>
<reference key="24">
    <citation type="journal article" date="2011" name="BMC Syst. Biol.">
        <title>Initial characterization of the human central proteome.</title>
        <authorList>
            <person name="Burkard T.R."/>
            <person name="Planyavsky M."/>
            <person name="Kaupe I."/>
            <person name="Breitwieser F.P."/>
            <person name="Buerckstuemmer T."/>
            <person name="Bennett K.L."/>
            <person name="Superti-Furga G."/>
            <person name="Colinge J."/>
        </authorList>
    </citation>
    <scope>IDENTIFICATION BY MASS SPECTROMETRY [LARGE SCALE ANALYSIS]</scope>
</reference>
<reference key="25">
    <citation type="journal article" date="2012" name="IUBMB Life">
        <title>Glucose-6-phosphate dehydrogenase, NADPH, and cell survival.</title>
        <authorList>
            <person name="Stanton R.C."/>
        </authorList>
    </citation>
    <scope>REVIEW</scope>
</reference>
<reference key="26">
    <citation type="journal article" date="2012" name="Mol. Cell. Proteomics">
        <title>Comparative large-scale characterisation of plant vs. mammal proteins reveals similar and idiosyncratic N-alpha acetylation features.</title>
        <authorList>
            <person name="Bienvenut W.V."/>
            <person name="Sumpton D."/>
            <person name="Martinez A."/>
            <person name="Lilla S."/>
            <person name="Espagne C."/>
            <person name="Meinnel T."/>
            <person name="Giglione C."/>
        </authorList>
    </citation>
    <scope>ACETYLATION [LARGE SCALE ANALYSIS] AT ALA-2</scope>
    <scope>CLEAVAGE OF INITIATOR METHIONINE [LARGE SCALE ANALYSIS]</scope>
    <scope>IDENTIFICATION BY MASS SPECTROMETRY [LARGE SCALE ANALYSIS]</scope>
</reference>
<reference key="27">
    <citation type="journal article" date="2012" name="Proc. Natl. Acad. Sci. U.S.A.">
        <title>N-terminal acetylome analyses and functional insights of the N-terminal acetyltransferase NatB.</title>
        <authorList>
            <person name="Van Damme P."/>
            <person name="Lasa M."/>
            <person name="Polevoda B."/>
            <person name="Gazquez C."/>
            <person name="Elosegui-Artola A."/>
            <person name="Kim D.S."/>
            <person name="De Juan-Pardo E."/>
            <person name="Demeyer K."/>
            <person name="Hole K."/>
            <person name="Larrea E."/>
            <person name="Timmerman E."/>
            <person name="Prieto J."/>
            <person name="Arnesen T."/>
            <person name="Sherman F."/>
            <person name="Gevaert K."/>
            <person name="Aldabe R."/>
        </authorList>
    </citation>
    <scope>ACETYLATION [LARGE SCALE ANALYSIS] AT ALA-2</scope>
    <scope>CLEAVAGE OF INITIATOR METHIONINE [LARGE SCALE ANALYSIS]</scope>
    <scope>IDENTIFICATION BY MASS SPECTROMETRY [LARGE SCALE ANALYSIS]</scope>
</reference>
<reference key="28">
    <citation type="journal article" date="2013" name="J. Proteome Res.">
        <title>Toward a comprehensive characterization of a human cancer cell phosphoproteome.</title>
        <authorList>
            <person name="Zhou H."/>
            <person name="Di Palma S."/>
            <person name="Preisinger C."/>
            <person name="Peng M."/>
            <person name="Polat A.N."/>
            <person name="Heck A.J."/>
            <person name="Mohammed S."/>
        </authorList>
    </citation>
    <scope>PHOSPHORYLATION [LARGE SCALE ANALYSIS] AT SER-8; THR-10 AND TYR-503</scope>
    <scope>IDENTIFICATION BY MASS SPECTROMETRY [LARGE SCALE ANALYSIS]</scope>
    <source>
        <tissue>Erythroleukemia</tissue>
    </source>
</reference>
<reference key="29">
    <citation type="journal article" date="2014" name="EMBO J.">
        <title>Regulation of G6PD acetylation by KAT9/SIRT2 modulates NADPH homeostasis and cell survival during oxidative stress.</title>
        <authorList>
            <person name="Wang Y.P."/>
            <person name="Zhou L.S."/>
            <person name="Zhao Y.Z."/>
            <person name="Wang S.W."/>
            <person name="Chen L.L."/>
            <person name="Liu L.X."/>
            <person name="Ling Z.Q."/>
            <person name="Hu F.J."/>
            <person name="Sun Y.P."/>
            <person name="Zhang J.Y."/>
            <person name="Yang C."/>
            <person name="Yang Y."/>
            <person name="Xiong Y."/>
            <person name="Guan K.L."/>
            <person name="Ye D."/>
        </authorList>
    </citation>
    <scope>FUNCTION</scope>
    <scope>CATALYTIC ACTIVITY</scope>
    <scope>PATHWAY</scope>
    <scope>ACETYLATION AT LYS-403 BY ELP3</scope>
    <scope>DEACETYLATION AT LYS-403 BY SIRT2</scope>
    <scope>INTERACTION WITH SIRT2</scope>
    <scope>MUTAGENESIS OF LYS-171; LYS-386 AND LYS-403</scope>
    <scope>SUBUNIT</scope>
</reference>
<reference key="30">
    <citation type="journal article" date="2018" name="Cell Res.">
        <title>Landscape of the regulatory elements for lysine 2-hydroxyisobutyrylation pathway.</title>
        <authorList>
            <person name="Huang H."/>
            <person name="Luo Z."/>
            <person name="Qi S."/>
            <person name="Huang J."/>
            <person name="Xu P."/>
            <person name="Wang X."/>
            <person name="Gao L."/>
            <person name="Li F."/>
            <person name="Wang J."/>
            <person name="Zhao W."/>
            <person name="Gu W."/>
            <person name="Chen Z."/>
            <person name="Dai L."/>
            <person name="Dai J."/>
            <person name="Zhao Y."/>
        </authorList>
    </citation>
    <scope>HYDROXYBUTYRYLATION AT LYS-171</scope>
</reference>
<reference key="31">
    <citation type="journal article" date="2020" name="Nat. Cancer">
        <title>Aldolase B suppresses hepatocellular carcinogenesis by inhibiting G6PD and pentose phosphate pathways.</title>
        <authorList>
            <person name="Li M."/>
            <person name="He X."/>
            <person name="Guo W."/>
            <person name="Yu H."/>
            <person name="Zhang S."/>
            <person name="Wang N."/>
            <person name="Liu G."/>
            <person name="Sa R."/>
            <person name="Shen X."/>
            <person name="Jiang Y."/>
            <person name="Tang Y."/>
            <person name="Zhuo Y."/>
            <person name="Yin C."/>
            <person name="Tu Q."/>
            <person name="Li N."/>
            <person name="Nie X."/>
            <person name="Li Y."/>
            <person name="Hu Z."/>
            <person name="Zhu H."/>
            <person name="Ding J."/>
            <person name="Li Z."/>
            <person name="Liu T."/>
            <person name="Zhang F."/>
            <person name="Zhou H."/>
            <person name="Li S."/>
            <person name="Yue J."/>
            <person name="Yan Z."/>
            <person name="Cheng S."/>
            <person name="Tao Y."/>
            <person name="Yin H."/>
        </authorList>
    </citation>
    <scope>FUNCTION</scope>
    <scope>CATALYTIC ACTIVITY</scope>
    <scope>SUBCELLULAR LOCATION</scope>
    <scope>INTERACTION WITH ALDOB AND TP53</scope>
</reference>
<reference key="32">
    <citation type="journal article" date="2000" name="Structure">
        <title>Human glucose-6-phosphate dehydrogenase: the crystal structure reveals a structural NADP(+) molecule and provides insights into enzyme deficiency.</title>
        <authorList>
            <person name="Au S.W."/>
            <person name="Gover S."/>
            <person name="Lam V.M."/>
            <person name="Adams M.J."/>
        </authorList>
    </citation>
    <scope>X-RAY CRYSTALLOGRAPHY (3.0 ANGSTROMS) OF VARIANT CANTON IN COMPLEX WITH NADP</scope>
    <scope>SUBUNIT</scope>
</reference>
<reference key="33">
    <citation type="journal article" date="1993" name="Hum. Mutat.">
        <title>Variants of glucose-6-phosphate dehydrogenase are due to missense mutations spread throughout the coding region of the gene.</title>
        <authorList>
            <person name="Vulliamy T."/>
            <person name="Beutler E."/>
            <person name="Luzzatto L."/>
        </authorList>
    </citation>
    <scope>REVIEW ON VARIANTS</scope>
</reference>
<reference key="34">
    <citation type="journal article" date="2002" name="Hum. Mutat.">
        <title>G6PDdb, an integrated database of glucose-6-phosphate dehydrogenase (G6PD) mutations.</title>
        <authorList>
            <person name="Kwok C.J."/>
            <person name="Martin A.C."/>
            <person name="Au S.W."/>
            <person name="Lam V.M."/>
        </authorList>
    </citation>
    <scope>REVIEW ON VARIANTS</scope>
</reference>
<reference key="35">
    <citation type="journal article" date="2005" name="Acta Crystallogr. D">
        <title>Structural studies of glucose-6-phosphate and NADP+ binding to human glucose-6-phosphate dehydrogenase.</title>
        <authorList>
            <person name="Kotaka M."/>
            <person name="Gover S."/>
            <person name="Vandeputte-Rutten L."/>
            <person name="Au S.W."/>
            <person name="Lam V.M."/>
            <person name="Adams M.J."/>
        </authorList>
    </citation>
    <scope>X-RAY CRYSTALLOGRAPHY (2.50 ANGSTROMS) OF 28-514 IN COMPLEX WITH NADP(+) AND D-GLUCOSE 6-PHOSPHATEE</scope>
    <scope>FUNCTION</scope>
    <scope>CATALYTIC ACTIVITY</scope>
    <scope>BIOPHYSICOCHEMICAL PROPERTIES</scope>
    <scope>SUBUNIT</scope>
</reference>
<reference key="36">
    <citation type="journal article" date="1987" name="Genomics">
        <title>A single nucleotide base transition is the basis of the common human glucose-6-phosphate dehydrogenase variant A (+).</title>
        <authorList>
            <person name="Takizawa T."/>
            <person name="Yoneyama Y."/>
            <person name="Miwa S."/>
            <person name="Yoshida A."/>
        </authorList>
    </citation>
    <scope>VARIANT ASP-126</scope>
</reference>
<reference key="37">
    <citation type="journal article" date="1988" name="Proc. Natl. Acad. Sci. U.S.A.">
        <title>Diverse point mutations in the human glucose-6-phosphate dehydrogenase gene cause enzyme deficiency and mild or severe hemolytic anemia.</title>
        <authorList>
            <person name="Vulliamy T.J."/>
            <person name="D'Urso M."/>
            <person name="Battistuzzi G."/>
            <person name="Estrada M."/>
            <person name="Foulkes N.S."/>
            <person name="Martini G."/>
            <person name="Calabro V."/>
            <person name="Poggi V."/>
            <person name="Giordano R."/>
            <person name="Town M."/>
            <person name="Luzzatto L."/>
            <person name="Persico M.G."/>
        </authorList>
    </citation>
    <scope>VARIANTS</scope>
</reference>
<reference key="38">
    <citation type="journal article" date="1989" name="Am. J. Hum. Genet.">
        <title>Two point mutations are responsible for G6PD polymorphism in Sardinia.</title>
        <authorList>
            <person name="de Vita G."/>
            <person name="Alcalay M."/>
            <person name="Sampietro M."/>
            <person name="Cappelini M.D."/>
            <person name="Fiorelli G."/>
            <person name="Toniolo D."/>
        </authorList>
    </citation>
    <scope>VARIANTS CNSHA1 PHE-188 AND HIS-282</scope>
</reference>
<reference key="39">
    <citation type="journal article" date="1992" name="Blood">
        <title>New glucose-6-phosphate dehydrogenase mutations from various ethnic groups.</title>
        <authorList>
            <person name="Beutler E."/>
            <person name="Westwood B."/>
            <person name="Prchal J.T."/>
            <person name="Vaca C.S."/>
            <person name="Bartsocas C.S."/>
            <person name="Baronciani L."/>
        </authorList>
    </citation>
    <scope>VARIANTS CNSHA1 PRO-198; CYS-387; LEU-394; ASP-410 AND PRO-439</scope>
    <scope>VARIANT MEXICO CITY GLN-227</scope>
    <scope>VARIANT IERAPETRA SER-353</scope>
</reference>
<reference key="40">
    <citation type="journal article" date="1992" name="Br. J. Haematol.">
        <title>Molecular basis of chronic non-spherocytic haemolytic anaemia: a new G6PD variant (393arg-to-his) with abnormal K(m) G6P and marked in vivo instability.</title>
        <authorList>
            <person name="Filosa S."/>
            <person name="Calabro V."/>
            <person name="Vallone D."/>
            <person name="Poggi V."/>
            <person name="Mason P."/>
            <person name="Pagnini D."/>
            <person name="Alfinito F."/>
            <person name="Rotoli B."/>
            <person name="Martini G."/>
            <person name="Luzzatto L."/>
            <person name="Battistuzzi G."/>
        </authorList>
    </citation>
    <scope>VARIANT CNSHA1 HIS-393</scope>
</reference>
<reference key="41">
    <citation type="journal article" date="1992" name="Hum. Mol. Genet.">
        <title>A novel C to T substitution at nucleotide 1360 of cDNA which abolishes a natural Hha I site accounts for a new G6PD deficiency gene in Chinese.</title>
        <authorList>
            <person name="Perng L.-I."/>
            <person name="Chiou S.-S."/>
            <person name="Liu T.-C."/>
            <person name="Chang J.-G."/>
        </authorList>
    </citation>
    <scope>VARIANT CNSHA1 CYS-454</scope>
</reference>
<reference key="42">
    <citation type="journal article" date="1992" name="Hum. Mol. Genet.">
        <title>G6PD Kalyan and G6PD Kerala; two deficient variants in India caused by the same 317 Glu--&gt;Lys mutation.</title>
        <authorList>
            <person name="Ahluwalia A."/>
            <person name="Corcoran C.M."/>
            <person name="Vulliamy T.J."/>
            <person name="Ishwad C.S."/>
            <person name="Naidu J.M."/>
            <person name="Stevens D.J."/>
            <person name="Mason P.J."/>
            <person name="Luzzatto L."/>
        </authorList>
    </citation>
    <scope>VARIANT CNSHA1 LYS-317</scope>
</reference>
<reference key="43">
    <citation type="journal article" date="1993" name="Hum. Mol. Genet.">
        <title>G6PD Aures: a new mutation (48 Ile--&gt;Thr) causing mild G6PD deficiency is associated with favism.</title>
        <authorList>
            <person name="Nafa K."/>
            <person name="Reghis A."/>
            <person name="Osmani N."/>
            <person name="Baghli L."/>
            <person name="Benabadji M."/>
            <person name="Kaplan J.-C."/>
            <person name="Vulliamy T.J."/>
            <person name="Luzzatto L."/>
        </authorList>
    </citation>
    <scope>VARIANT CNSHA1 THR-48</scope>
</reference>
<reference key="44">
    <citation type="journal article" date="1994" name="Blood">
        <title>Molecular study of eight Japanese cases of glucose-6-phosphate dehydrogenase deficiency by nonradioisotopic single-strand conformation polymorphism analysis.</title>
        <authorList>
            <person name="Hirono A."/>
            <person name="Miwa S."/>
            <person name="Fujii H."/>
            <person name="Ishida F."/>
            <person name="Yamada K."/>
            <person name="Kubota K."/>
        </authorList>
    </citation>
    <scope>VARIANT CNSHA1 GLY-176</scope>
</reference>
<reference key="45">
    <citation type="journal article" date="1994" name="Hum. Genet.">
        <title>A novel single-base mutation in the glucose 6-phosphate dehydrogenase gene is associated with chronic non-spherocytic haemolytic anaemia.</title>
        <authorList>
            <person name="Filosa S."/>
            <person name="Cai W."/>
            <person name="Galanello R."/>
            <person name="Cao A."/>
            <person name="de Mattia D."/>
            <person name="Schettini F."/>
            <person name="Martini G."/>
        </authorList>
    </citation>
    <scope>VARIANT CNSHA1 LEU-396</scope>
</reference>
<reference key="46">
    <citation type="journal article" date="1995" name="Am. J. Hum. Genet.">
        <title>Multiple glucose 6-phosphate dehydrogenase-deficient variants correlate with malaria endemicity in the Vanuatu archipelago (southwestern Pacific).</title>
        <authorList>
            <person name="Ganczakowski M."/>
            <person name="Town M."/>
            <person name="Bowden D.K."/>
            <person name="Vulliamy T.J."/>
            <person name="Kaneko A."/>
            <person name="Clegg J.B."/>
            <person name="Weatherall D.J."/>
            <person name="Luzzatto L."/>
        </authorList>
    </citation>
    <scope>VARIANTS NAMORU; VANUA LAVA; NAONE AND UNION</scope>
</reference>
<reference key="47">
    <citation type="journal article" date="1995" name="Am. J. Hum. Genet.">
        <title>A new glucose-6-phosphate dehydrogenase variant, G6PD Orissa (44 Ala--&gt;Gly), is the major polymorphic variant in tribal populations in India.</title>
        <authorList>
            <person name="Kaeda J.S."/>
            <person name="Chhotray G.P."/>
            <person name="Ranjit M.R."/>
            <person name="Bautista J.M."/>
            <person name="Reddy P.H."/>
            <person name="Stevens D."/>
            <person name="Naidu J.M."/>
            <person name="Britt R.P."/>
            <person name="Vulliamy T.J."/>
            <person name="Luzzatto L."/>
            <person name="Mason P.J."/>
        </authorList>
    </citation>
    <scope>VARIANT CNSHA1 GLY-44</scope>
</reference>
<reference key="48">
    <citation type="journal article" date="1995" name="Blood">
        <title>New glucose-6-phosphate dehydrogenase mutations associated with chronic anemia.</title>
        <authorList>
            <person name="Mason P.J."/>
            <person name="Sonati M.F."/>
            <person name="Macdonald D."/>
            <person name="Lanza C."/>
            <person name="Busutil D."/>
            <person name="Town M."/>
            <person name="Corcoran C.M."/>
            <person name="Kaeda J.S."/>
            <person name="Stevens D.J."/>
            <person name="Al-Ismail S."/>
            <person name="Altay C."/>
            <person name="Hatton C."/>
            <person name="Lewis D.S."/>
            <person name="McMullin M.F."/>
            <person name="Meloni T."/>
            <person name="Paul B."/>
            <person name="Pippard M."/>
            <person name="Prentice A.G."/>
            <person name="Vulliamy T.J."/>
            <person name="Luzzatto L."/>
        </authorList>
    </citation>
    <scope>VARIANTS CNSHA1 PRO-75; ASP-163; LYS-274 AND PHE-278</scope>
</reference>
<reference key="49">
    <citation type="journal article" date="1998" name="Hum. Mutat. Suppl.">
        <title>G6PD Mount Sinai: a new severe hemolytic variant characterized by dual mutations at nucleotides 376G and 1159T (N126D).</title>
        <authorList>
            <person name="Vlachos A."/>
            <person name="Westwood B."/>
            <person name="Lipton J.M."/>
            <person name="Beutler E."/>
        </authorList>
    </citation>
    <scope>VARIANT CNSHA1 CYS-387</scope>
    <scope>VARIANT ASP-126</scope>
</reference>
<reference key="50">
    <citation type="journal article" date="1998" name="Hum. Mutat.">
        <title>A new glucose 6 phosphate dehydrogenase variant, G6PD Sinnai (34 G-&gt;T).</title>
        <authorList>
            <person name="Galanello R."/>
            <person name="Loi D."/>
            <person name="Sollaino C."/>
            <person name="Dessi S."/>
            <person name="Cao A."/>
            <person name="Melis M.A."/>
        </authorList>
    </citation>
    <scope>VARIANT SINNAI LEU-12</scope>
</reference>
<reference key="51">
    <citation type="journal article" date="2000" name="Blood Cells Mol. Dis.">
        <title>A new exon 9 glucose-6-phosphate dehydrogenase mutation (G6PD 'Rehovot') in a Jewish Ethiopian family with variable phenotypes.</title>
        <authorList>
            <person name="Iancovici-Kidon M."/>
            <person name="Sthoeger D."/>
            <person name="Abrahamov A."/>
            <person name="Volach B."/>
            <person name="Beutler E."/>
            <person name="Gelbart T."/>
            <person name="Barak Y."/>
        </authorList>
    </citation>
    <scope>VARIANT REHOVOT HIS-322</scope>
</reference>
<reference key="52">
    <citation type="journal article" date="2008" name="J. Hum. Genet.">
        <title>A novel R198H mutation in the glucose-6-phosphate dehydrogenase gene in the tribal groups of the Nilgiris in Southern India.</title>
        <authorList>
            <person name="Chalvam R."/>
            <person name="Kedar P.S."/>
            <person name="Colah R.B."/>
            <person name="Ghosh K."/>
            <person name="Mukherjee M.B."/>
        </authorList>
    </citation>
    <scope>VARIANT NILGIRIS HIS-198</scope>
    <scope>VARIANT COIMBRA CYS-198</scope>
</reference>
<reference key="53">
    <citation type="journal article" date="2009" name="Science">
        <title>Positively selected G6PD-Mahidol mutation reduces Plasmodium vivax density in Southeast Asians.</title>
        <authorList>
            <person name="Louicharoen C."/>
            <person name="Patin E."/>
            <person name="Paul R."/>
            <person name="Nuchprayoon I."/>
            <person name="Witoonpanich B."/>
            <person name="Peerapittayamongkol C."/>
            <person name="Casademont I."/>
            <person name="Sura T."/>
            <person name="Laird N.M."/>
            <person name="Singhasivanon P."/>
            <person name="Quintana-Murci L."/>
            <person name="Sakuntabhai A."/>
        </authorList>
    </citation>
    <scope>ASSOCIATION OF VARIANT CNSHA1 SER-163 WITH REDUCED DENSITY OF PLASMODIUM VIVAX</scope>
</reference>
<reference key="54">
    <citation type="journal article" date="2015" name="J. Pediatr. Hematol. Oncol.">
        <title>Severe G6PD Deficiency Due to a New Missense Mutation in an Infant of Northern European Descent.</title>
        <authorList>
            <person name="Warny M."/>
            <person name="Lausen B."/>
            <person name="Birgens H."/>
            <person name="Knabe N."/>
            <person name="Petersen J."/>
        </authorList>
    </citation>
    <scope>VARIANT CNSHA1 SER-198</scope>
    <scope>CHARACTERIZATION OF VARIANT CNSHA1 SER-198</scope>
    <scope>FUNCTION</scope>
    <scope>CATALYTIC ACTIVITY</scope>
</reference>
<reference key="55">
    <citation type="journal article" date="2016" name="Nature">
        <title>Analysis of protein-coding genetic variation in 60,706 humans.</title>
        <authorList>
            <consortium name="Exome Aggregation Consortium"/>
            <person name="Lek M."/>
            <person name="Karczewski K.J."/>
            <person name="Minikel E.V."/>
            <person name="Samocha K.E."/>
            <person name="Banks E."/>
            <person name="Fennell T."/>
            <person name="O'Donnell-Luria A.H."/>
            <person name="Ware J.S."/>
            <person name="Hill A.J."/>
            <person name="Cummings B.B."/>
            <person name="Tukiainen T."/>
            <person name="Birnbaum D.P."/>
            <person name="Kosmicki J.A."/>
            <person name="Duncan L.E."/>
            <person name="Estrada K."/>
            <person name="Zhao F."/>
            <person name="Zou J."/>
            <person name="Pierce-Hoffman E."/>
            <person name="Berghout J."/>
            <person name="Cooper D.N."/>
            <person name="Deflaux N."/>
            <person name="DePristo M."/>
            <person name="Do R."/>
            <person name="Flannick J."/>
            <person name="Fromer M."/>
            <person name="Gauthier L."/>
            <person name="Goldstein J."/>
            <person name="Gupta N."/>
            <person name="Howrigan D."/>
            <person name="Kiezun A."/>
            <person name="Kurki M.I."/>
            <person name="Moonshine A.L."/>
            <person name="Natarajan P."/>
            <person name="Orozco L."/>
            <person name="Peloso G.M."/>
            <person name="Poplin R."/>
            <person name="Rivas M.A."/>
            <person name="Ruano-Rubio V."/>
            <person name="Rose S.A."/>
            <person name="Ruderfer D.M."/>
            <person name="Shakir K."/>
            <person name="Stenson P.D."/>
            <person name="Stevens C."/>
            <person name="Thomas B.P."/>
            <person name="Tiao G."/>
            <person name="Tusie-Luna M.T."/>
            <person name="Weisburd B."/>
            <person name="Won H.H."/>
            <person name="Yu D."/>
            <person name="Altshuler D.M."/>
            <person name="Ardissino D."/>
            <person name="Boehnke M."/>
            <person name="Danesh J."/>
            <person name="Donnelly S."/>
            <person name="Elosua R."/>
            <person name="Florez J.C."/>
            <person name="Gabriel S.B."/>
            <person name="Getz G."/>
            <person name="Glatt S.J."/>
            <person name="Hultman C.M."/>
            <person name="Kathiresan S."/>
            <person name="Laakso M."/>
            <person name="McCarroll S."/>
            <person name="McCarthy M.I."/>
            <person name="McGovern D."/>
            <person name="McPherson R."/>
            <person name="Neale B.M."/>
            <person name="Palotie A."/>
            <person name="Purcell S.M."/>
            <person name="Saleheen D."/>
            <person name="Scharf J.M."/>
            <person name="Sklar P."/>
            <person name="Sullivan P.F."/>
            <person name="Tuomilehto J."/>
            <person name="Tsuang M.T."/>
            <person name="Watkins H.C."/>
            <person name="Wilson J.G."/>
            <person name="Daly M.J."/>
            <person name="MacArthur D.G."/>
        </authorList>
    </citation>
    <scope>VARIANT ASP-126</scope>
</reference>
<reference key="56">
    <citation type="journal article" date="2017" name="Meta Gene">
        <title>Identification of a novel S184F mutation causing glucose-6-phosphate-dehydrogenase deficiency in a tribal family of Madhya Pradesh, Central India.</title>
        <authorList>
            <person name="Devendra R."/>
            <person name="Shanmugam R."/>
            <person name="Singh M.P.S.S."/>
            <person name="Vishwakarma C.P."/>
            <person name="Godbhole S."/>
            <person name="Singh N."/>
            <person name="Gupta V."/>
            <person name="Kedar P."/>
            <person name="Mukherjee M.B."/>
        </authorList>
    </citation>
    <scope>VARIANT DINDORI PHE-184</scope>
    <scope>CHARACTERIZATION OF VARIANT DINDORI PHE-184</scope>
    <scope>VARIANT KAIPING HIS-463</scope>
</reference>
<reference key="57">
    <citation type="journal article" date="2018" name="Hum. Genome Var.">
        <title>Report of an Italian family carrying a typical Indian variant of the Nilgiris tribal groups resulting from a de novo occurrence.</title>
        <authorList>
            <person name="Canu G."/>
            <person name="Mazzuccato G."/>
            <person name="Urbani A."/>
            <person name="Minucci A."/>
        </authorList>
    </citation>
    <scope>VARIANT NILGIRIS HIS-198</scope>
</reference>
<reference key="58">
    <citation type="journal article" date="2019" name="Indian J. Hematol. Blood Transfus.">
        <title>A novel G6PD p.Gly321Val mutation causing severe hemolysis in an Indian infant.</title>
        <authorList>
            <person name="Devendra R."/>
            <person name="Warang P."/>
            <person name="Gupta V."/>
            <person name="Chiddarwar A."/>
            <person name="Kedar P."/>
            <person name="Agarwal M.B."/>
            <person name="Mukherjee M.B."/>
        </authorList>
    </citation>
    <scope>VARIANT CNSHA1 VAL-321</scope>
    <scope>CHARACTERIZATION OF VARIANT CNSHA1 VAL-321</scope>
</reference>
<reference key="59">
    <citation type="journal article" date="2023" name="Commun. Biol.">
        <title>Substitution of arginine 219 by glycine compromises stability, dimerization, and catalytic activity in a G6PD mutant.</title>
        <authorList>
            <person name="Zgheib O."/>
            <person name="Chamchoy K."/>
            <person name="Nouspikel T."/>
            <person name="Blouin J.L."/>
            <person name="Cimasoni L."/>
            <person name="Quteineh L."/>
            <person name="Boonyuen U."/>
        </authorList>
    </citation>
    <scope>VARIANT CNSHA1 GLY-219</scope>
    <scope>CHARACTERIZATION OF VARIANT CNSHA1 GLY-219</scope>
    <scope>FUNCTION</scope>
    <scope>CATALYTIC ACTIVITY</scope>
    <scope>BIOPHYSICOCHEMICAL PROPERTIES</scope>
    <scope>SUBUNIT</scope>
</reference>
<evidence type="ECO:0000250" key="1">
    <source>
        <dbReference type="UniProtKB" id="P11411"/>
    </source>
</evidence>
<evidence type="ECO:0000269" key="2">
    <source>
    </source>
</evidence>
<evidence type="ECO:0000269" key="3">
    <source>
    </source>
</evidence>
<evidence type="ECO:0000269" key="4">
    <source>
    </source>
</evidence>
<evidence type="ECO:0000269" key="5">
    <source>
    </source>
</evidence>
<evidence type="ECO:0000269" key="6">
    <source>
    </source>
</evidence>
<evidence type="ECO:0000269" key="7">
    <source>
    </source>
</evidence>
<evidence type="ECO:0000269" key="8">
    <source>
    </source>
</evidence>
<evidence type="ECO:0000269" key="9">
    <source>
    </source>
</evidence>
<evidence type="ECO:0000269" key="10">
    <source>
    </source>
</evidence>
<evidence type="ECO:0000269" key="11">
    <source>
    </source>
</evidence>
<evidence type="ECO:0000269" key="12">
    <source>
    </source>
</evidence>
<evidence type="ECO:0000269" key="13">
    <source>
    </source>
</evidence>
<evidence type="ECO:0000269" key="14">
    <source>
    </source>
</evidence>
<evidence type="ECO:0000269" key="15">
    <source>
    </source>
</evidence>
<evidence type="ECO:0000269" key="16">
    <source>
    </source>
</evidence>
<evidence type="ECO:0000269" key="17">
    <source>
    </source>
</evidence>
<evidence type="ECO:0000269" key="18">
    <source>
    </source>
</evidence>
<evidence type="ECO:0000269" key="19">
    <source>
    </source>
</evidence>
<evidence type="ECO:0000269" key="20">
    <source>
    </source>
</evidence>
<evidence type="ECO:0000269" key="21">
    <source>
    </source>
</evidence>
<evidence type="ECO:0000269" key="22">
    <source>
    </source>
</evidence>
<evidence type="ECO:0000269" key="23">
    <source>
    </source>
</evidence>
<evidence type="ECO:0000269" key="24">
    <source>
    </source>
</evidence>
<evidence type="ECO:0000269" key="25">
    <source>
    </source>
</evidence>
<evidence type="ECO:0000269" key="26">
    <source>
    </source>
</evidence>
<evidence type="ECO:0000269" key="27">
    <source>
    </source>
</evidence>
<evidence type="ECO:0000269" key="28">
    <source>
    </source>
</evidence>
<evidence type="ECO:0000269" key="29">
    <source>
    </source>
</evidence>
<evidence type="ECO:0000269" key="30">
    <source>
    </source>
</evidence>
<evidence type="ECO:0000269" key="31">
    <source>
    </source>
</evidence>
<evidence type="ECO:0000269" key="32">
    <source>
    </source>
</evidence>
<evidence type="ECO:0000269" key="33">
    <source>
    </source>
</evidence>
<evidence type="ECO:0000269" key="34">
    <source>
    </source>
</evidence>
<evidence type="ECO:0000269" key="35">
    <source>
    </source>
</evidence>
<evidence type="ECO:0000269" key="36">
    <source ref="56"/>
</evidence>
<evidence type="ECO:0000303" key="37">
    <source>
    </source>
</evidence>
<evidence type="ECO:0000305" key="38"/>
<evidence type="ECO:0007744" key="39">
    <source>
        <dbReference type="PDB" id="1QKI"/>
    </source>
</evidence>
<evidence type="ECO:0007744" key="40">
    <source>
        <dbReference type="PDB" id="2BH9"/>
    </source>
</evidence>
<evidence type="ECO:0007744" key="41">
    <source>
        <dbReference type="PDB" id="2BHL"/>
    </source>
</evidence>
<evidence type="ECO:0007744" key="42">
    <source>
    </source>
</evidence>
<evidence type="ECO:0007744" key="43">
    <source>
    </source>
</evidence>
<evidence type="ECO:0007744" key="44">
    <source>
    </source>
</evidence>
<evidence type="ECO:0007744" key="45">
    <source>
    </source>
</evidence>
<evidence type="ECO:0007744" key="46">
    <source>
    </source>
</evidence>
<evidence type="ECO:0007744" key="47">
    <source>
    </source>
</evidence>
<evidence type="ECO:0007829" key="48">
    <source>
        <dbReference type="PDB" id="1QKI"/>
    </source>
</evidence>
<evidence type="ECO:0007829" key="49">
    <source>
        <dbReference type="PDB" id="2BH9"/>
    </source>
</evidence>
<evidence type="ECO:0007829" key="50">
    <source>
        <dbReference type="PDB" id="2BHL"/>
    </source>
</evidence>
<evidence type="ECO:0007829" key="51">
    <source>
        <dbReference type="PDB" id="6JYU"/>
    </source>
</evidence>
<evidence type="ECO:0007829" key="52">
    <source>
        <dbReference type="PDB" id="7SEH"/>
    </source>
</evidence>
<evidence type="ECO:0007829" key="53">
    <source>
        <dbReference type="PDB" id="7SNF"/>
    </source>
</evidence>
<sequence>MAEQVALSRTQVCGILREELFQGDAFHQSDTHIFIIMGASGDLAKKKIYPTIWWLFRDGLLPENTFIVGYARSRLTVADIRKQSEPFFKATPEEKLKLEDFFARNSYVAGQYDDAASYQRLNSHMNALHLGSQANRLFYLALPPTVYEAVTKNIHESCMSQIGWNRIIVEKPFGRDLQSSDRLSNHISSLFREDQIYRIDHYLGKEMVQNLMVLRFANRIFGPIWNRDNIACVILTFKEPFGTEGRGGYFDEFGIIRDVMQNHLLQMLCLVAMEKPASTNSDDVRDEKVKVLKCISEVQANNVVLGQYVGNPDGEGEATKGYLDDPTVPRGSTTATFAAVVLYVENERWDGVPFILRCGKALNERKAEVRLQFHDVAGDIFHQQCKRNELVIRVQPNEAVYTKMMTKKPGMFFNPEESELDLTYGNRYKNVKLPDAYERLILDVFCGSQMHFVRSDELREAWRIFTPLLHQIELEKPKPIPYIYGSRGPTEADELMKRVGFQYEGTYKWVNPHKL</sequence>
<name>G6PD_HUMAN</name>
<gene>
    <name type="primary">G6PD</name>
</gene>
<dbReference type="EC" id="1.1.1.49" evidence="10 16 27"/>
<dbReference type="EMBL" id="X03674">
    <property type="protein sequence ID" value="CAA27309.1"/>
    <property type="molecule type" value="mRNA"/>
</dbReference>
<dbReference type="EMBL" id="M65234">
    <property type="protein sequence ID" value="AAA63175.1"/>
    <property type="status" value="ALT_INIT"/>
    <property type="molecule type" value="Genomic_DNA"/>
</dbReference>
<dbReference type="EMBL" id="M26749">
    <property type="protein sequence ID" value="AAA63175.1"/>
    <property type="status" value="JOINED"/>
    <property type="molecule type" value="Genomic_DNA"/>
</dbReference>
<dbReference type="EMBL" id="M26750">
    <property type="protein sequence ID" value="AAA63175.1"/>
    <property type="status" value="JOINED"/>
    <property type="molecule type" value="Genomic_DNA"/>
</dbReference>
<dbReference type="EMBL" id="M65225">
    <property type="protein sequence ID" value="AAA63175.1"/>
    <property type="status" value="JOINED"/>
    <property type="molecule type" value="Genomic_DNA"/>
</dbReference>
<dbReference type="EMBL" id="M65226">
    <property type="protein sequence ID" value="AAA63175.1"/>
    <property type="status" value="JOINED"/>
    <property type="molecule type" value="Genomic_DNA"/>
</dbReference>
<dbReference type="EMBL" id="M65227">
    <property type="protein sequence ID" value="AAA63175.1"/>
    <property type="status" value="JOINED"/>
    <property type="molecule type" value="Genomic_DNA"/>
</dbReference>
<dbReference type="EMBL" id="M65228">
    <property type="protein sequence ID" value="AAA63175.1"/>
    <property type="status" value="JOINED"/>
    <property type="molecule type" value="Genomic_DNA"/>
</dbReference>
<dbReference type="EMBL" id="M65229">
    <property type="protein sequence ID" value="AAA63175.1"/>
    <property type="status" value="JOINED"/>
    <property type="molecule type" value="Genomic_DNA"/>
</dbReference>
<dbReference type="EMBL" id="M65230">
    <property type="protein sequence ID" value="AAA63175.1"/>
    <property type="status" value="JOINED"/>
    <property type="molecule type" value="Genomic_DNA"/>
</dbReference>
<dbReference type="EMBL" id="M65231">
    <property type="protein sequence ID" value="AAA63175.1"/>
    <property type="status" value="JOINED"/>
    <property type="molecule type" value="Genomic_DNA"/>
</dbReference>
<dbReference type="EMBL" id="M65233">
    <property type="protein sequence ID" value="AAA63175.1"/>
    <property type="status" value="JOINED"/>
    <property type="molecule type" value="Genomic_DNA"/>
</dbReference>
<dbReference type="EMBL" id="M65232">
    <property type="protein sequence ID" value="AAA63175.1"/>
    <property type="status" value="JOINED"/>
    <property type="molecule type" value="Genomic_DNA"/>
</dbReference>
<dbReference type="EMBL" id="M21248">
    <property type="protein sequence ID" value="AAA52500.1"/>
    <property type="molecule type" value="mRNA"/>
</dbReference>
<dbReference type="EMBL" id="M19866">
    <property type="protein sequence ID" value="AAA52501.1"/>
    <property type="molecule type" value="mRNA"/>
</dbReference>
<dbReference type="EMBL" id="X55448">
    <property type="protein sequence ID" value="CAA39089.1"/>
    <property type="molecule type" value="Genomic_DNA"/>
</dbReference>
<dbReference type="EMBL" id="L44140">
    <property type="protein sequence ID" value="AAA92653.1"/>
    <property type="molecule type" value="Genomic_DNA"/>
</dbReference>
<dbReference type="EMBL" id="AF277315">
    <property type="protein sequence ID" value="AAL27011.1"/>
    <property type="molecule type" value="Genomic_DNA"/>
</dbReference>
<dbReference type="EMBL" id="CH471172">
    <property type="protein sequence ID" value="EAW72682.1"/>
    <property type="molecule type" value="Genomic_DNA"/>
</dbReference>
<dbReference type="EMBL" id="CH471172">
    <property type="protein sequence ID" value="EAW72686.1"/>
    <property type="molecule type" value="Genomic_DNA"/>
</dbReference>
<dbReference type="EMBL" id="BC000337">
    <property type="protein sequence ID" value="AAH00337.1"/>
    <property type="molecule type" value="mRNA"/>
</dbReference>
<dbReference type="EMBL" id="M27940">
    <property type="protein sequence ID" value="AAA52504.1"/>
    <property type="molecule type" value="mRNA"/>
</dbReference>
<dbReference type="EMBL" id="S58359">
    <property type="protein sequence ID" value="AAB26169.1"/>
    <property type="molecule type" value="mRNA"/>
</dbReference>
<dbReference type="EMBL" id="X53815">
    <property type="protein sequence ID" value="CAA37811.1"/>
    <property type="molecule type" value="Genomic_DNA"/>
</dbReference>
<dbReference type="EMBL" id="S64462">
    <property type="protein sequence ID" value="AAB20299.1"/>
    <property type="molecule type" value="Genomic_DNA"/>
</dbReference>
<dbReference type="EMBL" id="AY158096">
    <property type="protein sequence ID" value="AAN76367.1"/>
    <property type="molecule type" value="Genomic_DNA"/>
</dbReference>
<dbReference type="EMBL" id="AY158097">
    <property type="protein sequence ID" value="AAN76368.1"/>
    <property type="molecule type" value="Genomic_DNA"/>
</dbReference>
<dbReference type="EMBL" id="AY158098">
    <property type="protein sequence ID" value="AAN76369.1"/>
    <property type="molecule type" value="Genomic_DNA"/>
</dbReference>
<dbReference type="EMBL" id="AY158099">
    <property type="protein sequence ID" value="AAN76370.1"/>
    <property type="molecule type" value="Genomic_DNA"/>
</dbReference>
<dbReference type="EMBL" id="AY158100">
    <property type="protein sequence ID" value="AAN76371.1"/>
    <property type="molecule type" value="Genomic_DNA"/>
</dbReference>
<dbReference type="EMBL" id="AY158101">
    <property type="protein sequence ID" value="AAN76372.1"/>
    <property type="molecule type" value="Genomic_DNA"/>
</dbReference>
<dbReference type="EMBL" id="AY158102">
    <property type="protein sequence ID" value="AAN76373.1"/>
    <property type="molecule type" value="Genomic_DNA"/>
</dbReference>
<dbReference type="EMBL" id="AY158103">
    <property type="protein sequence ID" value="AAN76374.1"/>
    <property type="molecule type" value="Genomic_DNA"/>
</dbReference>
<dbReference type="EMBL" id="AY158104">
    <property type="protein sequence ID" value="AAN76375.1"/>
    <property type="molecule type" value="Genomic_DNA"/>
</dbReference>
<dbReference type="EMBL" id="AY158105">
    <property type="protein sequence ID" value="AAN76376.1"/>
    <property type="molecule type" value="Genomic_DNA"/>
</dbReference>
<dbReference type="EMBL" id="AY158106">
    <property type="protein sequence ID" value="AAN76377.1"/>
    <property type="molecule type" value="Genomic_DNA"/>
</dbReference>
<dbReference type="EMBL" id="AY158107">
    <property type="protein sequence ID" value="AAN76378.1"/>
    <property type="molecule type" value="Genomic_DNA"/>
</dbReference>
<dbReference type="EMBL" id="AY158108">
    <property type="protein sequence ID" value="AAN76379.1"/>
    <property type="molecule type" value="Genomic_DNA"/>
</dbReference>
<dbReference type="EMBL" id="AY158109">
    <property type="protein sequence ID" value="AAN76380.1"/>
    <property type="molecule type" value="Genomic_DNA"/>
</dbReference>
<dbReference type="EMBL" id="AY158110">
    <property type="protein sequence ID" value="AAN76381.1"/>
    <property type="molecule type" value="Genomic_DNA"/>
</dbReference>
<dbReference type="EMBL" id="AY158111">
    <property type="protein sequence ID" value="AAN76382.1"/>
    <property type="molecule type" value="Genomic_DNA"/>
</dbReference>
<dbReference type="EMBL" id="AY158112">
    <property type="protein sequence ID" value="AAN76383.1"/>
    <property type="molecule type" value="Genomic_DNA"/>
</dbReference>
<dbReference type="EMBL" id="AY158113">
    <property type="protein sequence ID" value="AAN76384.1"/>
    <property type="molecule type" value="Genomic_DNA"/>
</dbReference>
<dbReference type="EMBL" id="AY158114">
    <property type="protein sequence ID" value="AAN76385.1"/>
    <property type="molecule type" value="Genomic_DNA"/>
</dbReference>
<dbReference type="EMBL" id="AY158115">
    <property type="protein sequence ID" value="AAN76386.1"/>
    <property type="molecule type" value="Genomic_DNA"/>
</dbReference>
<dbReference type="EMBL" id="AY158116">
    <property type="protein sequence ID" value="AAN76387.1"/>
    <property type="molecule type" value="Genomic_DNA"/>
</dbReference>
<dbReference type="EMBL" id="AY158117">
    <property type="protein sequence ID" value="AAN76388.1"/>
    <property type="molecule type" value="Genomic_DNA"/>
</dbReference>
<dbReference type="EMBL" id="AY158118">
    <property type="protein sequence ID" value="AAN76389.1"/>
    <property type="molecule type" value="Genomic_DNA"/>
</dbReference>
<dbReference type="EMBL" id="AY158119">
    <property type="protein sequence ID" value="AAN76390.1"/>
    <property type="molecule type" value="Genomic_DNA"/>
</dbReference>
<dbReference type="EMBL" id="AY158120">
    <property type="protein sequence ID" value="AAN76391.1"/>
    <property type="molecule type" value="Genomic_DNA"/>
</dbReference>
<dbReference type="EMBL" id="AY158121">
    <property type="protein sequence ID" value="AAN76392.1"/>
    <property type="molecule type" value="Genomic_DNA"/>
</dbReference>
<dbReference type="EMBL" id="AY158122">
    <property type="protein sequence ID" value="AAN76393.1"/>
    <property type="molecule type" value="Genomic_DNA"/>
</dbReference>
<dbReference type="EMBL" id="AY158123">
    <property type="protein sequence ID" value="AAN76394.1"/>
    <property type="molecule type" value="Genomic_DNA"/>
</dbReference>
<dbReference type="EMBL" id="AY158124">
    <property type="protein sequence ID" value="AAN76395.1"/>
    <property type="molecule type" value="Genomic_DNA"/>
</dbReference>
<dbReference type="EMBL" id="AY158125">
    <property type="protein sequence ID" value="AAN76396.1"/>
    <property type="molecule type" value="Genomic_DNA"/>
</dbReference>
<dbReference type="EMBL" id="AY158126">
    <property type="protein sequence ID" value="AAN76397.1"/>
    <property type="molecule type" value="Genomic_DNA"/>
</dbReference>
<dbReference type="EMBL" id="AY158127">
    <property type="protein sequence ID" value="AAN76398.1"/>
    <property type="molecule type" value="Genomic_DNA"/>
</dbReference>
<dbReference type="EMBL" id="AY158128">
    <property type="protein sequence ID" value="AAN76399.1"/>
    <property type="molecule type" value="Genomic_DNA"/>
</dbReference>
<dbReference type="EMBL" id="AY158129">
    <property type="protein sequence ID" value="AAN76400.1"/>
    <property type="molecule type" value="Genomic_DNA"/>
</dbReference>
<dbReference type="EMBL" id="AY158130">
    <property type="protein sequence ID" value="AAN76401.1"/>
    <property type="molecule type" value="Genomic_DNA"/>
</dbReference>
<dbReference type="EMBL" id="AY158131">
    <property type="protein sequence ID" value="AAN76402.1"/>
    <property type="molecule type" value="Genomic_DNA"/>
</dbReference>
<dbReference type="EMBL" id="AY158132">
    <property type="protein sequence ID" value="AAN76403.1"/>
    <property type="molecule type" value="Genomic_DNA"/>
</dbReference>
<dbReference type="EMBL" id="AY158133">
    <property type="protein sequence ID" value="AAN76404.1"/>
    <property type="molecule type" value="Genomic_DNA"/>
</dbReference>
<dbReference type="EMBL" id="AY158134">
    <property type="protein sequence ID" value="AAN76405.1"/>
    <property type="molecule type" value="Genomic_DNA"/>
</dbReference>
<dbReference type="EMBL" id="AY158135">
    <property type="protein sequence ID" value="AAN76406.1"/>
    <property type="molecule type" value="Genomic_DNA"/>
</dbReference>
<dbReference type="EMBL" id="AY158136">
    <property type="protein sequence ID" value="AAN76407.1"/>
    <property type="molecule type" value="Genomic_DNA"/>
</dbReference>
<dbReference type="EMBL" id="AY158137">
    <property type="protein sequence ID" value="AAN76408.1"/>
    <property type="molecule type" value="Genomic_DNA"/>
</dbReference>
<dbReference type="EMBL" id="AY158138">
    <property type="protein sequence ID" value="AAN76409.1"/>
    <property type="molecule type" value="Genomic_DNA"/>
</dbReference>
<dbReference type="EMBL" id="AY158139">
    <property type="protein sequence ID" value="AAN76410.1"/>
    <property type="molecule type" value="Genomic_DNA"/>
</dbReference>
<dbReference type="EMBL" id="AY158140">
    <property type="protein sequence ID" value="AAN76411.1"/>
    <property type="molecule type" value="Genomic_DNA"/>
</dbReference>
<dbReference type="EMBL" id="AY158141">
    <property type="protein sequence ID" value="AAN76412.1"/>
    <property type="molecule type" value="Genomic_DNA"/>
</dbReference>
<dbReference type="EMBL" id="AY158142">
    <property type="protein sequence ID" value="AAN76413.1"/>
    <property type="molecule type" value="Genomic_DNA"/>
</dbReference>
<dbReference type="EMBL" id="M12996">
    <property type="protein sequence ID" value="AAA52499.1"/>
    <property type="molecule type" value="mRNA"/>
</dbReference>
<dbReference type="EMBL" id="M23423">
    <property type="protein sequence ID" value="AAB59390.1"/>
    <property type="molecule type" value="Genomic_DNA"/>
</dbReference>
<dbReference type="CCDS" id="CCDS44023.1">
    <molecule id="P11413-1"/>
</dbReference>
<dbReference type="PIR" id="A40309">
    <property type="entry name" value="DEHUG6"/>
</dbReference>
<dbReference type="RefSeq" id="NP_000393.4">
    <molecule id="P11413-3"/>
    <property type="nucleotide sequence ID" value="NM_000402.4"/>
</dbReference>
<dbReference type="RefSeq" id="NP_001035810.1">
    <molecule id="P11413-1"/>
    <property type="nucleotide sequence ID" value="NM_001042351.3"/>
</dbReference>
<dbReference type="RefSeq" id="NP_001346945.1">
    <molecule id="P11413-1"/>
    <property type="nucleotide sequence ID" value="NM_001360016.2"/>
</dbReference>
<dbReference type="PDB" id="1QKI">
    <property type="method" value="X-ray"/>
    <property type="resolution" value="3.00 A"/>
    <property type="chains" value="A/B/C/D/E/F/G/H=2-515"/>
</dbReference>
<dbReference type="PDB" id="2BH9">
    <property type="method" value="X-ray"/>
    <property type="resolution" value="2.50 A"/>
    <property type="chains" value="A=27-515"/>
</dbReference>
<dbReference type="PDB" id="2BHL">
    <property type="method" value="X-ray"/>
    <property type="resolution" value="2.90 A"/>
    <property type="chains" value="A/B=28-515"/>
</dbReference>
<dbReference type="PDB" id="5UKW">
    <property type="method" value="X-ray"/>
    <property type="resolution" value="2.65 A"/>
    <property type="chains" value="A=29-511"/>
</dbReference>
<dbReference type="PDB" id="6E07">
    <property type="method" value="X-ray"/>
    <property type="resolution" value="2.60 A"/>
    <property type="chains" value="B/C/F/L/N/Q/T/W=1-515"/>
</dbReference>
<dbReference type="PDB" id="6E08">
    <property type="method" value="X-ray"/>
    <property type="resolution" value="1.90 A"/>
    <property type="chains" value="L=1-515"/>
</dbReference>
<dbReference type="PDB" id="6JYU">
    <property type="method" value="X-ray"/>
    <property type="resolution" value="1.89 A"/>
    <property type="chains" value="A=29-513"/>
</dbReference>
<dbReference type="PDB" id="6VA0">
    <property type="method" value="X-ray"/>
    <property type="resolution" value="3.10 A"/>
    <property type="chains" value="A=1-515"/>
</dbReference>
<dbReference type="PDB" id="6VA7">
    <property type="method" value="X-ray"/>
    <property type="resolution" value="3.07 A"/>
    <property type="chains" value="A=1-515"/>
</dbReference>
<dbReference type="PDB" id="6VA8">
    <property type="method" value="X-ray"/>
    <property type="resolution" value="3.95 A"/>
    <property type="chains" value="A=1-515"/>
</dbReference>
<dbReference type="PDB" id="6VA9">
    <property type="method" value="X-ray"/>
    <property type="resolution" value="3.95 A"/>
    <property type="chains" value="A=1-515"/>
</dbReference>
<dbReference type="PDB" id="6VAQ">
    <property type="method" value="X-ray"/>
    <property type="resolution" value="2.95 A"/>
    <property type="chains" value="A=1-515"/>
</dbReference>
<dbReference type="PDB" id="7SEH">
    <property type="method" value="X-ray"/>
    <property type="resolution" value="2.90 A"/>
    <property type="chains" value="A/B=1-515"/>
</dbReference>
<dbReference type="PDB" id="7SEI">
    <property type="method" value="X-ray"/>
    <property type="resolution" value="3.65 A"/>
    <property type="chains" value="A=1-515"/>
</dbReference>
<dbReference type="PDB" id="7SNF">
    <property type="method" value="EM"/>
    <property type="resolution" value="3.40 A"/>
    <property type="chains" value="A/B=1-515"/>
</dbReference>
<dbReference type="PDB" id="7SNG">
    <property type="method" value="EM"/>
    <property type="resolution" value="2.80 A"/>
    <property type="chains" value="A/B/C/D=1-515"/>
</dbReference>
<dbReference type="PDB" id="7SNH">
    <property type="method" value="EM"/>
    <property type="resolution" value="2.20 A"/>
    <property type="chains" value="A/B/C/D=1-515"/>
</dbReference>
<dbReference type="PDB" id="7SNI">
    <property type="method" value="EM"/>
    <property type="resolution" value="2.50 A"/>
    <property type="chains" value="A/B/C/D=1-515"/>
</dbReference>
<dbReference type="PDB" id="7TOE">
    <property type="method" value="EM"/>
    <property type="resolution" value="3.00 A"/>
    <property type="chains" value="A/B/C/D=1-515"/>
</dbReference>
<dbReference type="PDB" id="7TOF">
    <property type="method" value="EM"/>
    <property type="resolution" value="3.70 A"/>
    <property type="chains" value="A/B=1-515"/>
</dbReference>
<dbReference type="PDB" id="7UAG">
    <property type="method" value="EM"/>
    <property type="resolution" value="3.50 A"/>
    <property type="chains" value="A/B=1-515"/>
</dbReference>
<dbReference type="PDB" id="7UAL">
    <property type="method" value="EM"/>
    <property type="resolution" value="2.90 A"/>
    <property type="chains" value="A/B/C/D=1-515"/>
</dbReference>
<dbReference type="PDB" id="7UC2">
    <property type="method" value="EM"/>
    <property type="resolution" value="2.50 A"/>
    <property type="chains" value="A/B/C/D=1-515"/>
</dbReference>
<dbReference type="PDB" id="7ZVD">
    <property type="method" value="X-ray"/>
    <property type="resolution" value="2.46 A"/>
    <property type="chains" value="N=28-511"/>
</dbReference>
<dbReference type="PDBsum" id="1QKI"/>
<dbReference type="PDBsum" id="2BH9"/>
<dbReference type="PDBsum" id="2BHL"/>
<dbReference type="PDBsum" id="5UKW"/>
<dbReference type="PDBsum" id="6E07"/>
<dbReference type="PDBsum" id="6E08"/>
<dbReference type="PDBsum" id="6JYU"/>
<dbReference type="PDBsum" id="6VA0"/>
<dbReference type="PDBsum" id="6VA7"/>
<dbReference type="PDBsum" id="6VA8"/>
<dbReference type="PDBsum" id="6VA9"/>
<dbReference type="PDBsum" id="6VAQ"/>
<dbReference type="PDBsum" id="7SEH"/>
<dbReference type="PDBsum" id="7SEI"/>
<dbReference type="PDBsum" id="7SNF"/>
<dbReference type="PDBsum" id="7SNG"/>
<dbReference type="PDBsum" id="7SNH"/>
<dbReference type="PDBsum" id="7SNI"/>
<dbReference type="PDBsum" id="7TOE"/>
<dbReference type="PDBsum" id="7TOF"/>
<dbReference type="PDBsum" id="7UAG"/>
<dbReference type="PDBsum" id="7UAL"/>
<dbReference type="PDBsum" id="7UC2"/>
<dbReference type="PDBsum" id="7ZVD"/>
<dbReference type="EMDB" id="EMD-25224"/>
<dbReference type="EMDB" id="EMD-25225"/>
<dbReference type="EMDB" id="EMD-25226"/>
<dbReference type="EMDB" id="EMD-25227"/>
<dbReference type="EMDB" id="EMD-26030"/>
<dbReference type="EMDB" id="EMD-26031"/>
<dbReference type="EMDB" id="EMD-26425"/>
<dbReference type="EMDB" id="EMD-26428"/>
<dbReference type="EMDB" id="EMD-26442"/>
<dbReference type="SASBDB" id="P11413"/>
<dbReference type="SMR" id="P11413"/>
<dbReference type="BioGRID" id="108814">
    <property type="interactions" value="210"/>
</dbReference>
<dbReference type="CORUM" id="P11413"/>
<dbReference type="FunCoup" id="P11413">
    <property type="interactions" value="1666"/>
</dbReference>
<dbReference type="IntAct" id="P11413">
    <property type="interactions" value="36"/>
</dbReference>
<dbReference type="MINT" id="P11413"/>
<dbReference type="STRING" id="9606.ENSP00000377192"/>
<dbReference type="BindingDB" id="P11413"/>
<dbReference type="ChEMBL" id="CHEMBL5347"/>
<dbReference type="DrugBank" id="DB05107">
    <property type="generic name" value="16-Bromoepiandrosterone"/>
</dbReference>
<dbReference type="DrugBank" id="DB11638">
    <property type="generic name" value="Artenimol"/>
</dbReference>
<dbReference type="DrugBank" id="DB03085">
    <property type="generic name" value="Glycolic acid"/>
</dbReference>
<dbReference type="DrugBank" id="DB03461">
    <property type="generic name" value="Nicotinamide adenine dinucleotide phosphate"/>
</dbReference>
<dbReference type="DrugBank" id="DB01708">
    <property type="generic name" value="Prasterone"/>
</dbReference>
<dbReference type="DrugCentral" id="P11413"/>
<dbReference type="GlyCosmos" id="P11413">
    <property type="glycosylation" value="1 site, 1 glycan"/>
</dbReference>
<dbReference type="GlyGen" id="P11413">
    <property type="glycosylation" value="2 sites, 1 O-linked glycan (1 site)"/>
</dbReference>
<dbReference type="iPTMnet" id="P11413"/>
<dbReference type="MetOSite" id="P11413"/>
<dbReference type="PhosphoSitePlus" id="P11413"/>
<dbReference type="SwissPalm" id="P11413"/>
<dbReference type="BioMuta" id="G6PD"/>
<dbReference type="DMDM" id="116242483"/>
<dbReference type="REPRODUCTION-2DPAGE" id="IPI00289800"/>
<dbReference type="CPTAC" id="CPTAC-204"/>
<dbReference type="CPTAC" id="CPTAC-205"/>
<dbReference type="CPTAC" id="CPTAC-2734"/>
<dbReference type="jPOST" id="P11413"/>
<dbReference type="MassIVE" id="P11413"/>
<dbReference type="PaxDb" id="9606-ENSP00000377192"/>
<dbReference type="PeptideAtlas" id="P11413"/>
<dbReference type="ProteomicsDB" id="52771">
    <molecule id="P11413-1"/>
</dbReference>
<dbReference type="ProteomicsDB" id="52772">
    <molecule id="P11413-2"/>
</dbReference>
<dbReference type="ProteomicsDB" id="52773">
    <molecule id="P11413-3"/>
</dbReference>
<dbReference type="Pumba" id="P11413"/>
<dbReference type="Antibodypedia" id="352">
    <property type="antibodies" value="747 antibodies from 39 providers"/>
</dbReference>
<dbReference type="DNASU" id="2539"/>
<dbReference type="Ensembl" id="ENST00000369620.6">
    <molecule id="P11413-2"/>
    <property type="protein sequence ID" value="ENSP00000358633.2"/>
    <property type="gene ID" value="ENSG00000160211.20"/>
</dbReference>
<dbReference type="Ensembl" id="ENST00000393562.10">
    <molecule id="P11413-1"/>
    <property type="protein sequence ID" value="ENSP00000377192.3"/>
    <property type="gene ID" value="ENSG00000160211.20"/>
</dbReference>
<dbReference type="Ensembl" id="ENST00000393564.7">
    <molecule id="P11413-1"/>
    <property type="protein sequence ID" value="ENSP00000377194.2"/>
    <property type="gene ID" value="ENSG00000160211.20"/>
</dbReference>
<dbReference type="Ensembl" id="ENST00000696429.1">
    <molecule id="P11413-1"/>
    <property type="protein sequence ID" value="ENSP00000512624.1"/>
    <property type="gene ID" value="ENSG00000160211.20"/>
</dbReference>
<dbReference type="Ensembl" id="ENST00000696430.1">
    <molecule id="P11413-1"/>
    <property type="protein sequence ID" value="ENSP00000512625.1"/>
    <property type="gene ID" value="ENSG00000160211.20"/>
</dbReference>
<dbReference type="GeneID" id="2539"/>
<dbReference type="KEGG" id="hsa:2539"/>
<dbReference type="MANE-Select" id="ENST00000393562.10">
    <property type="protein sequence ID" value="ENSP00000377192.3"/>
    <property type="RefSeq nucleotide sequence ID" value="NM_001360016.2"/>
    <property type="RefSeq protein sequence ID" value="NP_001346945.1"/>
</dbReference>
<dbReference type="UCSC" id="uc004flx.3">
    <molecule id="P11413-1"/>
    <property type="organism name" value="human"/>
</dbReference>
<dbReference type="AGR" id="HGNC:4057"/>
<dbReference type="CTD" id="2539"/>
<dbReference type="DisGeNET" id="2539"/>
<dbReference type="GeneCards" id="G6PD"/>
<dbReference type="HGNC" id="HGNC:4057">
    <property type="gene designation" value="G6PD"/>
</dbReference>
<dbReference type="HPA" id="ENSG00000160211">
    <property type="expression patterns" value="Low tissue specificity"/>
</dbReference>
<dbReference type="MalaCards" id="G6PD"/>
<dbReference type="MIM" id="300908">
    <property type="type" value="phenotype"/>
</dbReference>
<dbReference type="MIM" id="305900">
    <property type="type" value="gene"/>
</dbReference>
<dbReference type="neXtProt" id="NX_P11413"/>
<dbReference type="OpenTargets" id="ENSG00000160211"/>
<dbReference type="Orphanet" id="466026">
    <property type="disease" value="Class I glucose-6-phosphate dehydrogenase deficiency"/>
</dbReference>
<dbReference type="PharmGKB" id="PA28469"/>
<dbReference type="VEuPathDB" id="HostDB:ENSG00000160211"/>
<dbReference type="eggNOG" id="KOG0563">
    <property type="taxonomic scope" value="Eukaryota"/>
</dbReference>
<dbReference type="GeneTree" id="ENSGT00530000063435"/>
<dbReference type="HOGENOM" id="CLU_013524_2_3_1"/>
<dbReference type="InParanoid" id="P11413"/>
<dbReference type="OMA" id="ERAGYYE"/>
<dbReference type="OrthoDB" id="60984at2759"/>
<dbReference type="PAN-GO" id="P11413">
    <property type="GO annotations" value="4 GO annotations based on evolutionary models"/>
</dbReference>
<dbReference type="PhylomeDB" id="P11413"/>
<dbReference type="TreeFam" id="TF300584"/>
<dbReference type="BioCyc" id="MetaCyc:HS08467-MONOMER"/>
<dbReference type="BRENDA" id="1.1.1.49">
    <property type="organism ID" value="2681"/>
</dbReference>
<dbReference type="PathwayCommons" id="P11413"/>
<dbReference type="Reactome" id="R-HSA-5628897">
    <property type="pathway name" value="TP53 Regulates Metabolic Genes"/>
</dbReference>
<dbReference type="Reactome" id="R-HSA-71336">
    <property type="pathway name" value="Pentose phosphate pathway"/>
</dbReference>
<dbReference type="Reactome" id="R-HSA-9818028">
    <property type="pathway name" value="NFE2L2 regulates pentose phosphate pathway genes"/>
</dbReference>
<dbReference type="SABIO-RK" id="P11413"/>
<dbReference type="SignaLink" id="P11413"/>
<dbReference type="SIGNOR" id="P11413"/>
<dbReference type="UniPathway" id="UPA00115">
    <property type="reaction ID" value="UER00408"/>
</dbReference>
<dbReference type="BioGRID-ORCS" id="2539">
    <property type="hits" value="93 hits in 797 CRISPR screens"/>
</dbReference>
<dbReference type="CD-CODE" id="FB4E32DD">
    <property type="entry name" value="Presynaptic clusters and postsynaptic densities"/>
</dbReference>
<dbReference type="ChiTaRS" id="G6PD">
    <property type="organism name" value="human"/>
</dbReference>
<dbReference type="EvolutionaryTrace" id="P11413"/>
<dbReference type="GeneWiki" id="Glucose-6-phosphate_dehydrogenase"/>
<dbReference type="GenomeRNAi" id="2539"/>
<dbReference type="Pharos" id="P11413">
    <property type="development level" value="Tchem"/>
</dbReference>
<dbReference type="PRO" id="PR:P11413"/>
<dbReference type="Proteomes" id="UP000005640">
    <property type="component" value="Chromosome X"/>
</dbReference>
<dbReference type="RNAct" id="P11413">
    <property type="molecule type" value="protein"/>
</dbReference>
<dbReference type="Bgee" id="ENSG00000160211">
    <property type="expression patterns" value="Expressed in stromal cell of endometrium and 143 other cell types or tissues"/>
</dbReference>
<dbReference type="ExpressionAtlas" id="P11413">
    <property type="expression patterns" value="baseline and differential"/>
</dbReference>
<dbReference type="GO" id="GO:0034451">
    <property type="term" value="C:centriolar satellite"/>
    <property type="evidence" value="ECO:0000314"/>
    <property type="project" value="HPA"/>
</dbReference>
<dbReference type="GO" id="GO:0005737">
    <property type="term" value="C:cytoplasm"/>
    <property type="evidence" value="ECO:0000314"/>
    <property type="project" value="LIFEdb"/>
</dbReference>
<dbReference type="GO" id="GO:0009898">
    <property type="term" value="C:cytoplasmic side of plasma membrane"/>
    <property type="evidence" value="ECO:0000314"/>
    <property type="project" value="BHF-UCL"/>
</dbReference>
<dbReference type="GO" id="GO:0005829">
    <property type="term" value="C:cytosol"/>
    <property type="evidence" value="ECO:0000314"/>
    <property type="project" value="HPA"/>
</dbReference>
<dbReference type="GO" id="GO:0070062">
    <property type="term" value="C:extracellular exosome"/>
    <property type="evidence" value="ECO:0007005"/>
    <property type="project" value="UniProtKB"/>
</dbReference>
<dbReference type="GO" id="GO:0043231">
    <property type="term" value="C:intracellular membrane-bounded organelle"/>
    <property type="evidence" value="ECO:0000314"/>
    <property type="project" value="HPA"/>
</dbReference>
<dbReference type="GO" id="GO:0016020">
    <property type="term" value="C:membrane"/>
    <property type="evidence" value="ECO:0007005"/>
    <property type="project" value="UniProtKB"/>
</dbReference>
<dbReference type="GO" id="GO:0005536">
    <property type="term" value="F:D-glucose binding"/>
    <property type="evidence" value="ECO:0000314"/>
    <property type="project" value="BHF-UCL"/>
</dbReference>
<dbReference type="GO" id="GO:0004345">
    <property type="term" value="F:glucose-6-phosphate dehydrogenase activity"/>
    <property type="evidence" value="ECO:0000314"/>
    <property type="project" value="UniProtKB"/>
</dbReference>
<dbReference type="GO" id="GO:0042802">
    <property type="term" value="F:identical protein binding"/>
    <property type="evidence" value="ECO:0000353"/>
    <property type="project" value="IntAct"/>
</dbReference>
<dbReference type="GO" id="GO:0050661">
    <property type="term" value="F:NADP binding"/>
    <property type="evidence" value="ECO:0000314"/>
    <property type="project" value="BHF-UCL"/>
</dbReference>
<dbReference type="GO" id="GO:0042803">
    <property type="term" value="F:protein homodimerization activity"/>
    <property type="evidence" value="ECO:0000353"/>
    <property type="project" value="UniProtKB"/>
</dbReference>
<dbReference type="GO" id="GO:0034599">
    <property type="term" value="P:cellular response to oxidative stress"/>
    <property type="evidence" value="ECO:0000315"/>
    <property type="project" value="BHF-UCL"/>
</dbReference>
<dbReference type="GO" id="GO:0006695">
    <property type="term" value="P:cholesterol biosynthetic process"/>
    <property type="evidence" value="ECO:0000315"/>
    <property type="project" value="BHF-UCL"/>
</dbReference>
<dbReference type="GO" id="GO:0043249">
    <property type="term" value="P:erythrocyte maturation"/>
    <property type="evidence" value="ECO:0000315"/>
    <property type="project" value="BHF-UCL"/>
</dbReference>
<dbReference type="GO" id="GO:0051156">
    <property type="term" value="P:glucose 6-phosphate metabolic process"/>
    <property type="evidence" value="ECO:0000314"/>
    <property type="project" value="UniProtKB"/>
</dbReference>
<dbReference type="GO" id="GO:0006006">
    <property type="term" value="P:glucose metabolic process"/>
    <property type="evidence" value="ECO:0000318"/>
    <property type="project" value="GO_Central"/>
</dbReference>
<dbReference type="GO" id="GO:0006749">
    <property type="term" value="P:glutathione metabolic process"/>
    <property type="evidence" value="ECO:0000315"/>
    <property type="project" value="BHF-UCL"/>
</dbReference>
<dbReference type="GO" id="GO:0006629">
    <property type="term" value="P:lipid metabolic process"/>
    <property type="evidence" value="ECO:0000304"/>
    <property type="project" value="BHF-UCL"/>
</dbReference>
<dbReference type="GO" id="GO:0006739">
    <property type="term" value="P:NADP metabolic process"/>
    <property type="evidence" value="ECO:0000314"/>
    <property type="project" value="UniProtKB"/>
</dbReference>
<dbReference type="GO" id="GO:0006740">
    <property type="term" value="P:NADPH regeneration"/>
    <property type="evidence" value="ECO:0000315"/>
    <property type="project" value="BHF-UCL"/>
</dbReference>
<dbReference type="GO" id="GO:0061052">
    <property type="term" value="P:negative regulation of cell growth involved in cardiac muscle cell development"/>
    <property type="evidence" value="ECO:0007669"/>
    <property type="project" value="Ensembl"/>
</dbReference>
<dbReference type="GO" id="GO:2000378">
    <property type="term" value="P:negative regulation of reactive oxygen species metabolic process"/>
    <property type="evidence" value="ECO:0007669"/>
    <property type="project" value="Ensembl"/>
</dbReference>
<dbReference type="GO" id="GO:0019322">
    <property type="term" value="P:pentose biosynthetic process"/>
    <property type="evidence" value="ECO:0000314"/>
    <property type="project" value="BHF-UCL"/>
</dbReference>
<dbReference type="GO" id="GO:0006098">
    <property type="term" value="P:pentose-phosphate shunt"/>
    <property type="evidence" value="ECO:0000314"/>
    <property type="project" value="BHF-UCL"/>
</dbReference>
<dbReference type="GO" id="GO:0009051">
    <property type="term" value="P:pentose-phosphate shunt, oxidative branch"/>
    <property type="evidence" value="ECO:0000315"/>
    <property type="project" value="BHF-UCL"/>
</dbReference>
<dbReference type="GO" id="GO:1904879">
    <property type="term" value="P:positive regulation of calcium ion transmembrane transport via high voltage-gated calcium channel"/>
    <property type="evidence" value="ECO:0007669"/>
    <property type="project" value="Ensembl"/>
</dbReference>
<dbReference type="GO" id="GO:0043523">
    <property type="term" value="P:regulation of neuron apoptotic process"/>
    <property type="evidence" value="ECO:0007669"/>
    <property type="project" value="Ensembl"/>
</dbReference>
<dbReference type="GO" id="GO:0045471">
    <property type="term" value="P:response to ethanol"/>
    <property type="evidence" value="ECO:0007669"/>
    <property type="project" value="Ensembl"/>
</dbReference>
<dbReference type="GO" id="GO:0032094">
    <property type="term" value="P:response to food"/>
    <property type="evidence" value="ECO:0007669"/>
    <property type="project" value="Ensembl"/>
</dbReference>
<dbReference type="GO" id="GO:0010041">
    <property type="term" value="P:response to iron(III) ion"/>
    <property type="evidence" value="ECO:0007669"/>
    <property type="project" value="Ensembl"/>
</dbReference>
<dbReference type="GO" id="GO:0046390">
    <property type="term" value="P:ribose phosphate biosynthetic process"/>
    <property type="evidence" value="ECO:0000315"/>
    <property type="project" value="BHF-UCL"/>
</dbReference>
<dbReference type="GO" id="GO:0021762">
    <property type="term" value="P:substantia nigra development"/>
    <property type="evidence" value="ECO:0007007"/>
    <property type="project" value="UniProtKB"/>
</dbReference>
<dbReference type="FunFam" id="3.30.360.10:FF:000013">
    <property type="entry name" value="Glucose-6-phosphate 1-dehydrogenase"/>
    <property type="match status" value="1"/>
</dbReference>
<dbReference type="FunFam" id="3.40.50.720:FF:000111">
    <property type="entry name" value="Glucose-6-phosphate 1-dehydrogenase"/>
    <property type="match status" value="1"/>
</dbReference>
<dbReference type="Gene3D" id="3.30.360.10">
    <property type="entry name" value="Dihydrodipicolinate Reductase, domain 2"/>
    <property type="match status" value="1"/>
</dbReference>
<dbReference type="Gene3D" id="3.40.50.720">
    <property type="entry name" value="NAD(P)-binding Rossmann-like Domain"/>
    <property type="match status" value="1"/>
</dbReference>
<dbReference type="HAMAP" id="MF_00966">
    <property type="entry name" value="G6PD"/>
    <property type="match status" value="1"/>
</dbReference>
<dbReference type="InterPro" id="IPR001282">
    <property type="entry name" value="G6P_DH"/>
</dbReference>
<dbReference type="InterPro" id="IPR019796">
    <property type="entry name" value="G6P_DH_AS"/>
</dbReference>
<dbReference type="InterPro" id="IPR022675">
    <property type="entry name" value="G6P_DH_C"/>
</dbReference>
<dbReference type="InterPro" id="IPR022674">
    <property type="entry name" value="G6P_DH_NAD-bd"/>
</dbReference>
<dbReference type="InterPro" id="IPR036291">
    <property type="entry name" value="NAD(P)-bd_dom_sf"/>
</dbReference>
<dbReference type="NCBIfam" id="TIGR00871">
    <property type="entry name" value="zwf"/>
    <property type="match status" value="1"/>
</dbReference>
<dbReference type="PANTHER" id="PTHR23429:SF0">
    <property type="entry name" value="GLUCOSE-6-PHOSPHATE 1-DEHYDROGENASE"/>
    <property type="match status" value="1"/>
</dbReference>
<dbReference type="PANTHER" id="PTHR23429">
    <property type="entry name" value="GLUCOSE-6-PHOSPHATE 1-DEHYDROGENASE G6PD"/>
    <property type="match status" value="1"/>
</dbReference>
<dbReference type="Pfam" id="PF02781">
    <property type="entry name" value="G6PD_C"/>
    <property type="match status" value="1"/>
</dbReference>
<dbReference type="Pfam" id="PF00479">
    <property type="entry name" value="G6PD_N"/>
    <property type="match status" value="1"/>
</dbReference>
<dbReference type="PIRSF" id="PIRSF000110">
    <property type="entry name" value="G6PD"/>
    <property type="match status" value="1"/>
</dbReference>
<dbReference type="PRINTS" id="PR00079">
    <property type="entry name" value="G6PDHDRGNASE"/>
</dbReference>
<dbReference type="SUPFAM" id="SSF55347">
    <property type="entry name" value="Glyceraldehyde-3-phosphate dehydrogenase-like, C-terminal domain"/>
    <property type="match status" value="1"/>
</dbReference>
<dbReference type="SUPFAM" id="SSF51735">
    <property type="entry name" value="NAD(P)-binding Rossmann-fold domains"/>
    <property type="match status" value="1"/>
</dbReference>
<dbReference type="PROSITE" id="PS00069">
    <property type="entry name" value="G6P_DEHYDROGENASE"/>
    <property type="match status" value="1"/>
</dbReference>
<keyword id="KW-0002">3D-structure</keyword>
<keyword id="KW-0007">Acetylation</keyword>
<keyword id="KW-0025">Alternative splicing</keyword>
<keyword id="KW-0119">Carbohydrate metabolism</keyword>
<keyword id="KW-0963">Cytoplasm</keyword>
<keyword id="KW-0903">Direct protein sequencing</keyword>
<keyword id="KW-0225">Disease variant</keyword>
<keyword id="KW-0313">Glucose metabolism</keyword>
<keyword id="KW-0360">Hereditary hemolytic anemia</keyword>
<keyword id="KW-0379">Hydroxylation</keyword>
<keyword id="KW-0472">Membrane</keyword>
<keyword id="KW-0521">NADP</keyword>
<keyword id="KW-0560">Oxidoreductase</keyword>
<keyword id="KW-0597">Phosphoprotein</keyword>
<keyword id="KW-1267">Proteomics identification</keyword>
<keyword id="KW-1185">Reference proteome</keyword>
<comment type="function">
    <text evidence="10 16 17 25 26 27">Catalyzes the rate-limiting step of the oxidative pentose-phosphate pathway, which represents a route for the dissimilation of carbohydrates besides glycolysis. The main function of this enzyme is to provide reducing power (NADPH) and pentose phosphates for fatty acid and nucleic acid synthesis.</text>
</comment>
<comment type="catalytic activity">
    <reaction evidence="10 16 17 25 26 27">
        <text>D-glucose 6-phosphate + NADP(+) = 6-phospho-D-glucono-1,5-lactone + NADPH + H(+)</text>
        <dbReference type="Rhea" id="RHEA:15841"/>
        <dbReference type="ChEBI" id="CHEBI:15378"/>
        <dbReference type="ChEBI" id="CHEBI:57783"/>
        <dbReference type="ChEBI" id="CHEBI:57955"/>
        <dbReference type="ChEBI" id="CHEBI:58349"/>
        <dbReference type="ChEBI" id="CHEBI:61548"/>
        <dbReference type="EC" id="1.1.1.49"/>
    </reaction>
    <physiologicalReaction direction="left-to-right" evidence="17">
        <dbReference type="Rhea" id="RHEA:15842"/>
    </physiologicalReaction>
</comment>
<comment type="biophysicochemical properties">
    <kinetics>
        <KM evidence="10">7.07 uM for NADP</KM>
        <KM evidence="10">52 uM for glucose 6-phosphate</KM>
        <KM evidence="26">46.1 uM for glucose 6-phosphate</KM>
        <KM evidence="26">12.9 uM for NADP</KM>
    </kinetics>
</comment>
<comment type="pathway">
    <text evidence="10 16 17 27">Carbohydrate degradation; pentose phosphate pathway; D-ribulose 5-phosphate from D-glucose 6-phosphate (oxidative stage): step 1/3.</text>
</comment>
<comment type="subunit">
    <text evidence="3 10 16 25 26">Homotetramer; dimer of dimers (PubMed:10745013, PubMed:15858258, PubMed:24769394, PubMed:38066190). Interacts with SIRT2; the interaction is enhanced by H(2)O(2) treatment (PubMed:24769394). Forms a ternary complex with ALDOB and TP53; this interaction is direct. ALDOB stabilizes the complex inhibiting G6PD activity and keeping oxidative pentose phosphate metabolism in check.</text>
</comment>
<comment type="interaction">
    <interactant intactId="EBI-4289891">
        <id>P11413</id>
    </interactant>
    <interactant intactId="EBI-4289891">
        <id>P11413</id>
        <label>G6PD</label>
    </interactant>
    <organismsDiffer>false</organismsDiffer>
    <experiments>3</experiments>
</comment>
<comment type="interaction">
    <interactant intactId="EBI-4289891">
        <id>P11413</id>
    </interactant>
    <interactant intactId="EBI-352682">
        <id>P04792</id>
        <label>HSPB1</label>
    </interactant>
    <organismsDiffer>false</organismsDiffer>
    <experiments>2</experiments>
</comment>
<comment type="interaction">
    <interactant intactId="EBI-4289891">
        <id>P11413</id>
    </interactant>
    <interactant intactId="EBI-477232">
        <id>Q8IXJ6</id>
        <label>SIRT2</label>
    </interactant>
    <organismsDiffer>false</organismsDiffer>
    <experiments>3</experiments>
</comment>
<comment type="subcellular location">
    <subcellularLocation>
        <location evidence="25 27">Cytoplasm</location>
        <location evidence="25 27">Cytosol</location>
    </subcellularLocation>
    <subcellularLocation>
        <location>Membrane</location>
        <topology evidence="27">Peripheral membrane protein</topology>
    </subcellularLocation>
</comment>
<comment type="alternative products">
    <event type="alternative splicing"/>
    <isoform>
        <id>P11413-1</id>
        <name>Short</name>
        <sequence type="displayed"/>
    </isoform>
    <isoform>
        <id>P11413-2</id>
        <name>Long</name>
        <sequence type="described" ref="VSP_001592"/>
    </isoform>
    <isoform>
        <id>P11413-3</id>
        <name>3</name>
        <sequence type="described" ref="VSP_037802"/>
    </isoform>
</comment>
<comment type="tissue specificity">
    <text>Isoform Long is found in lymphoblasts, granulocytes and sperm.</text>
</comment>
<comment type="PTM">
    <text evidence="16 28">Acetylated by ELP3 at Lys-403; acetylation inhibits its homodimerization and enzyme activity. Deacetylated by SIRT2 at Lys-403; deacetylation stimulates its enzyme activity.</text>
</comment>
<comment type="polymorphism">
    <text>The sequence shown is that of variant B, the most common variant.</text>
</comment>
<comment type="disease" evidence="5 7 8 9 11 13 14 15 17 19 20 23 26 29 30 31 32 33 34 35">
    <disease id="DI-01351">
        <name>Anemia, congenital, non-spherocytic hemolytic, 1</name>
        <acronym>CNSHA1</acronym>
        <description>An X-linked disease characterized by G6PD deficiency, acute hemolytic anemia, fatigue, back pain, and jaundice. In most patients, the disease is triggered by an exogenous agent, such as some drugs, food, or infection. Increased unconjugated bilirubin, lactate dehydrogenase, and reticulocytosis are markers of the disorder. Although G6PD deficiency can be life-threatening, most patients are asymptomatic throughout their life.</description>
        <dbReference type="MIM" id="300908"/>
    </disease>
    <text>The disease is caused by variants affecting the gene represented in this entry. Deficiency of G6PD is associated with hemolytic anemia in two different situations. First, in areas in which malaria has been endemic, G6PD-deficiency alleles have reached high frequencies (1% to 50%) and deficient individuals, though essentially asymptomatic in the steady state, have a high risk of acute hemolytic attacks. Secondly, sporadic cases of G6PD deficiency occur at a very low frequencies, and they usually present a more severe phenotype. Several types of CNSHA1 are recognized. Class-I variants are associated with severe CNSHA1; class-II have an activity &lt;10% of normal; class-III have an activity of 10% to 60% of normal; class-IV have near normal activity.</text>
</comment>
<comment type="miscellaneous">
    <text>Binds two molecules of NADP. The first one is a cosubstrate (bound to the N-terminal domain), the second is bound to the C-terminal domain and functions as a structural element.</text>
</comment>
<comment type="similarity">
    <text evidence="38">Belongs to the glucose-6-phosphate dehydrogenase family.</text>
</comment>
<comment type="sequence caution" evidence="38">
    <conflict type="erroneous initiation">
        <sequence resource="EMBL-CDS" id="AAA63175"/>
    </conflict>
    <text>Truncated N-terminus.</text>
</comment>
<comment type="online information" name="G6PDdb">
    <link uri="http://www.bioinf.org.uk/mutations/g6pd/"/>
    <text>G6PD mutation database</text>
</comment>
<proteinExistence type="evidence at protein level"/>
<feature type="initiator methionine" description="Removed" evidence="6 28 43 45 46">
    <location>
        <position position="1"/>
    </location>
</feature>
<feature type="chain" id="PRO_0000068083" description="Glucose-6-phosphate 1-dehydrogenase">
    <location>
        <begin position="2"/>
        <end position="515"/>
    </location>
</feature>
<feature type="active site" description="Proton acceptor" evidence="1">
    <location>
        <position position="263"/>
    </location>
</feature>
<feature type="binding site" evidence="3 10 39 40">
    <location>
        <begin position="38"/>
        <end position="45"/>
    </location>
    <ligand>
        <name>NADP(+)</name>
        <dbReference type="ChEBI" id="CHEBI:58349"/>
        <label>1</label>
    </ligand>
</feature>
<feature type="binding site" evidence="3 10 39 40">
    <location>
        <position position="72"/>
    </location>
    <ligand>
        <name>NADP(+)</name>
        <dbReference type="ChEBI" id="CHEBI:58349"/>
        <label>1</label>
    </ligand>
</feature>
<feature type="binding site" evidence="3 10 39 40">
    <location>
        <position position="147"/>
    </location>
    <ligand>
        <name>NADP(+)</name>
        <dbReference type="ChEBI" id="CHEBI:58349"/>
        <label>1</label>
    </ligand>
</feature>
<feature type="binding site" evidence="10 40">
    <location>
        <position position="171"/>
    </location>
    <ligand>
        <name>D-glucose 6-phosphate</name>
        <dbReference type="ChEBI" id="CHEBI:61548"/>
    </ligand>
</feature>
<feature type="binding site" evidence="3 10 39 40">
    <location>
        <position position="171"/>
    </location>
    <ligand>
        <name>NADP(+)</name>
        <dbReference type="ChEBI" id="CHEBI:58349"/>
        <label>1</label>
    </ligand>
</feature>
<feature type="binding site" evidence="10 40">
    <location>
        <begin position="201"/>
        <end position="205"/>
    </location>
    <ligand>
        <name>D-glucose 6-phosphate</name>
        <dbReference type="ChEBI" id="CHEBI:61548"/>
    </ligand>
</feature>
<feature type="binding site" evidence="10 40">
    <location>
        <position position="239"/>
    </location>
    <ligand>
        <name>D-glucose 6-phosphate</name>
        <dbReference type="ChEBI" id="CHEBI:61548"/>
    </ligand>
</feature>
<feature type="binding site" evidence="10 40">
    <location>
        <position position="258"/>
    </location>
    <ligand>
        <name>D-glucose 6-phosphate</name>
        <dbReference type="ChEBI" id="CHEBI:61548"/>
    </ligand>
</feature>
<feature type="binding site" evidence="3 10 39 40">
    <location>
        <position position="357"/>
    </location>
    <ligand>
        <name>NADP(+)</name>
        <dbReference type="ChEBI" id="CHEBI:58349"/>
        <label>2</label>
    </ligand>
</feature>
<feature type="binding site" evidence="10 41">
    <location>
        <position position="360"/>
    </location>
    <ligand>
        <name>D-glucose 6-phosphate</name>
        <dbReference type="ChEBI" id="CHEBI:61548"/>
    </ligand>
</feature>
<feature type="binding site" evidence="10 41">
    <location>
        <position position="365"/>
    </location>
    <ligand>
        <name>D-glucose 6-phosphate</name>
        <dbReference type="ChEBI" id="CHEBI:61548"/>
    </ligand>
</feature>
<feature type="binding site" evidence="3 10 39 40">
    <location>
        <position position="366"/>
    </location>
    <ligand>
        <name>NADP(+)</name>
        <dbReference type="ChEBI" id="CHEBI:58349"/>
        <label>2</label>
    </ligand>
</feature>
<feature type="binding site" evidence="3 10 39 40">
    <location>
        <position position="370"/>
    </location>
    <ligand>
        <name>NADP(+)</name>
        <dbReference type="ChEBI" id="CHEBI:58349"/>
        <label>2</label>
    </ligand>
</feature>
<feature type="binding site" evidence="3 10 39 40">
    <location>
        <position position="393"/>
    </location>
    <ligand>
        <name>NADP(+)</name>
        <dbReference type="ChEBI" id="CHEBI:58349"/>
        <label>2</label>
    </ligand>
</feature>
<feature type="binding site" evidence="10 41">
    <location>
        <position position="395"/>
    </location>
    <ligand>
        <name>D-glucose 6-phosphate</name>
        <dbReference type="ChEBI" id="CHEBI:61548"/>
    </ligand>
</feature>
<feature type="binding site" evidence="3 10 39 40">
    <location>
        <begin position="401"/>
        <end position="403"/>
    </location>
    <ligand>
        <name>NADP(+)</name>
        <dbReference type="ChEBI" id="CHEBI:58349"/>
        <label>2</label>
    </ligand>
</feature>
<feature type="binding site" evidence="3 10 39 40">
    <location>
        <begin position="421"/>
        <end position="423"/>
    </location>
    <ligand>
        <name>NADP(+)</name>
        <dbReference type="ChEBI" id="CHEBI:58349"/>
        <label>2</label>
    </ligand>
</feature>
<feature type="binding site" evidence="3 10 39 40">
    <location>
        <position position="487"/>
    </location>
    <ligand>
        <name>NADP(+)</name>
        <dbReference type="ChEBI" id="CHEBI:58349"/>
        <label>2</label>
    </ligand>
</feature>
<feature type="binding site" evidence="3 10 39 40">
    <location>
        <position position="503"/>
    </location>
    <ligand>
        <name>NADP(+)</name>
        <dbReference type="ChEBI" id="CHEBI:58349"/>
        <label>2</label>
    </ligand>
</feature>
<feature type="binding site" evidence="3 10 39 40">
    <location>
        <position position="509"/>
    </location>
    <ligand>
        <name>NADP(+)</name>
        <dbReference type="ChEBI" id="CHEBI:58349"/>
        <label>2</label>
    </ligand>
</feature>
<feature type="modified residue" description="N-acetylalanine" evidence="28 43 45 46">
    <location>
        <position position="2"/>
    </location>
</feature>
<feature type="modified residue" description="Phosphoserine" evidence="47">
    <location>
        <position position="8"/>
    </location>
</feature>
<feature type="modified residue" description="Phosphothreonine" evidence="47">
    <location>
        <position position="10"/>
    </location>
</feature>
<feature type="modified residue" description="N6-acetyllysine" evidence="44">
    <location>
        <position position="89"/>
    </location>
</feature>
<feature type="modified residue" description="N6-(2-hydroxyisobutyryl)lysine; alternate" evidence="21">
    <location>
        <position position="171"/>
    </location>
</feature>
<feature type="modified residue" description="N6-acetyllysine; alternate" evidence="44">
    <location>
        <position position="171"/>
    </location>
</feature>
<feature type="modified residue" description="N6-acetyllysine" evidence="16 44">
    <location>
        <position position="403"/>
    </location>
</feature>
<feature type="modified residue" description="N6-acetyllysine" evidence="44">
    <location>
        <position position="432"/>
    </location>
</feature>
<feature type="modified residue" description="N6-acetyllysine" evidence="44">
    <location>
        <position position="497"/>
    </location>
</feature>
<feature type="modified residue" description="Phosphotyrosine" evidence="47">
    <location>
        <position position="503"/>
    </location>
</feature>
<feature type="splice variant" id="VSP_037802" description="In isoform 3." evidence="37">
    <original>M</original>
    <variation>MGRRGSAPGNGRTLRGCERGGRRRRSADSVM</variation>
    <location>
        <position position="1"/>
    </location>
</feature>
<feature type="splice variant" id="VSP_001592" description="In isoform Long." evidence="38">
    <original>R</original>
    <variation>RGPGRQGGSGSESCSLSLGSLVWGPHALEPGEQGGELRRALASSVPR</variation>
    <location>
        <position position="257"/>
    </location>
</feature>
<feature type="sequence variant" id="VAR_002450" description="In Sinnai." evidence="2">
    <original>V</original>
    <variation>L</variation>
    <location>
        <position position="12"/>
    </location>
</feature>
<feature type="sequence variant" id="VAR_002451" description="In CNSHA1; Gahoe; class III; frequent in Chinese; dbSNP:rs137852340." evidence="14">
    <original>H</original>
    <variation>R</variation>
    <location>
        <position position="32"/>
    </location>
</feature>
<feature type="sequence variant" id="VAR_002452" description="In CNSHA1; Sunderland; class I.">
    <location>
        <position position="35"/>
    </location>
</feature>
<feature type="sequence variant" id="VAR_002453" description="In CNSHA1; Orissa; class III; frequent in Indian tribal populations; dbSNP:rs78478128." evidence="33">
    <original>A</original>
    <variation>G</variation>
    <location>
        <position position="44"/>
    </location>
</feature>
<feature type="sequence variant" id="VAR_002454" description="In CNSHA1; Aures; class II; dbSNP:rs76645461." evidence="32">
    <original>I</original>
    <variation>T</variation>
    <location>
        <position position="48"/>
    </location>
</feature>
<feature type="sequence variant" id="VAR_002455" description="In CNSHA1; Metaponto; class III; dbSNP:rs137852315.">
    <original>D</original>
    <variation>N</variation>
    <location>
        <position position="58"/>
    </location>
</feature>
<feature type="sequence variant" id="VAR_002456" description="In CNSHA1; A(-) type I; class III; frequent in African population; dbSNP:rs1050828." evidence="5 13 19 34">
    <original>V</original>
    <variation>M</variation>
    <location>
        <position position="68"/>
    </location>
</feature>
<feature type="sequence variant" id="VAR_002457" description="In CNSHA1; Namoru; 4% activity; dbSNP:rs137852349.">
    <original>Y</original>
    <variation>H</variation>
    <location>
        <position position="70"/>
    </location>
</feature>
<feature type="sequence variant" id="VAR_002458" description="In CNSHA1; Swansea; class I." evidence="29">
    <original>L</original>
    <variation>P</variation>
    <location>
        <position position="75"/>
    </location>
</feature>
<feature type="sequence variant" id="VAR_002460" description="In CNSHA1; Konan/Ube; class III; dbSNP:rs138687036.">
    <original>R</original>
    <variation>C</variation>
    <location>
        <position position="81"/>
    </location>
</feature>
<feature type="sequence variant" id="VAR_002459" description="In CNSHA1; Lagosanto; class III; dbSNP:rs782308266.">
    <original>R</original>
    <variation>H</variation>
    <location>
        <position position="81"/>
    </location>
</feature>
<feature type="sequence variant" id="VAR_002461" description="In CNSHA1; Vancouver; class I; dbSNP:rs267606835.">
    <original>S</original>
    <variation>C</variation>
    <location>
        <position position="106"/>
    </location>
</feature>
<feature type="sequence variant" id="VAR_002462" description="Found in Santa Maria and Mount Sinai; associated with C-387 in Mount Sinai; class IV and class I; dbSNP:rs1050829." evidence="5 13 18 19 24 34 35">
    <original>N</original>
    <variation>D</variation>
    <location>
        <position position="126"/>
    </location>
</feature>
<feature type="sequence variant" id="VAR_002463" description="In CNSHA1; Vanua Lava; 4% activity; dbSNP:rs78365220.">
    <original>L</original>
    <variation>P</variation>
    <location>
        <position position="128"/>
    </location>
</feature>
<feature type="sequence variant" id="VAR_002464" description="In Chinese-4; dbSNP:rs137852341.">
    <original>G</original>
    <variation>V</variation>
    <location>
        <position position="131"/>
    </location>
</feature>
<feature type="sequence variant" id="VAR_002465" description="In CNSHA1; Ilesha; class III; dbSNP:rs137852313.">
    <original>E</original>
    <variation>K</variation>
    <location>
        <position position="156"/>
    </location>
</feature>
<feature type="sequence variant" id="VAR_002467" description="In CNSHA1; Plymouth; class I." evidence="29">
    <original>G</original>
    <variation>D</variation>
    <location>
        <position position="163"/>
    </location>
</feature>
<feature type="sequence variant" id="VAR_002466" description="In CNSHA1; Mahidol; class III; associated with reduced density of Plasmodium vivax but not Plasmodium falciparum in Southeast Asians; reduced activity; dbSNP:rs137852314.">
    <original>G</original>
    <variation>S</variation>
    <location>
        <position position="163"/>
    </location>
</feature>
<feature type="sequence variant" id="VAR_002468" description="In CNSHA1; Chinese-3; class II; dbSNP:rs137852331.">
    <original>N</original>
    <variation>D</variation>
    <location>
        <position position="165"/>
    </location>
</feature>
<feature type="sequence variant" id="VAR_002469" description="In CNSHA1; Naone; 1% activity.">
    <original>R</original>
    <variation>H</variation>
    <location>
        <position position="166"/>
    </location>
</feature>
<feature type="sequence variant" id="VAR_002470" description="In CNSHA1; Shinshu; class I." evidence="31">
    <original>D</original>
    <variation>G</variation>
    <location>
        <position position="176"/>
    </location>
</feature>
<feature type="sequence variant" id="VAR_002471" description="In CNSHA1; Santa Maria; class I; dbSNP:rs5030872.">
    <original>D</original>
    <variation>V</variation>
    <location>
        <position position="181"/>
    </location>
</feature>
<feature type="sequence variant" id="VAR_002472" description="In CNSHA1; Vancouver; class I; dbSNP:rs267606836.">
    <original>R</original>
    <variation>W</variation>
    <location>
        <position position="182"/>
    </location>
</feature>
<feature type="sequence variant" id="VAR_081894" description="In Dindori; class II; 5% of activity; dbSNP:rs782315572." evidence="36">
    <original>S</original>
    <variation>F</variation>
    <location>
        <position position="184"/>
    </location>
</feature>
<feature type="sequence variant" id="VAR_002473" description="In CNSHA1; Sassari/Cagliari; class II; frequent in the Mediterranean; dbSNP:rs5030868." evidence="20">
    <original>S</original>
    <variation>F</variation>
    <location>
        <position position="188"/>
    </location>
</feature>
<feature type="sequence variant" id="VAR_002474" description="In Coimbra; class II; dbSNP:rs137852330." evidence="12">
    <original>R</original>
    <variation>C</variation>
    <location>
        <position position="198"/>
    </location>
</feature>
<feature type="sequence variant" id="VAR_081895" description="In Nilgiris; class II; dbSNP:rs137852332." evidence="12 22">
    <original>R</original>
    <variation>H</variation>
    <location>
        <position position="198"/>
    </location>
</feature>
<feature type="sequence variant" id="VAR_002475" description="In CNSHA1; Santiago; class I; dbSNP:rs137852332." evidence="11">
    <original>R</original>
    <variation>P</variation>
    <location>
        <position position="198"/>
    </location>
</feature>
<feature type="sequence variant" id="VAR_075555" description="In CNSHA1; Herlev; loss of glucose-6-phosphate dehydrogenase activity." evidence="17">
    <original>R</original>
    <variation>S</variation>
    <location>
        <position position="198"/>
    </location>
</feature>
<feature type="sequence variant" id="VAR_002476" description="In CNSHA1; Sibari; class III; dbSNP:rs782754619.">
    <original>M</original>
    <variation>V</variation>
    <location>
        <position position="212"/>
    </location>
</feature>
<feature type="sequence variant" id="VAR_002477" description="In CNSHA1; Minnesota; class I; dbSNP:rs137852326.">
    <original>V</original>
    <variation>L</variation>
    <location>
        <position position="213"/>
    </location>
</feature>
<feature type="sequence variant" id="VAR_002478" description="In CNSHA1; Harilaou; class I; dbSNP:rs137852319.">
    <original>F</original>
    <variation>L</variation>
    <location>
        <position position="216"/>
    </location>
</feature>
<feature type="sequence variant" id="VAR_088817" description="In CNSHA1; Meyer; class I; likely pathogenic; disrupts dimer formation; reduces catalytic activity; decreases protein stability; no impact on glucose-6-phosphate binding affinity." evidence="26">
    <original>R</original>
    <variation>G</variation>
    <location>
        <position position="219"/>
    </location>
</feature>
<feature type="sequence variant" id="VAR_002480" description="In CNSHA1; A- type 2; class III; dbSNP:rs137852328.">
    <original>R</original>
    <variation>L</variation>
    <location>
        <position position="227"/>
    </location>
</feature>
<feature type="sequence variant" id="VAR_002479" description="In Mexico City; class III; dbSNP:rs137852328." evidence="11">
    <original>R</original>
    <variation>Q</variation>
    <location>
        <position position="227"/>
    </location>
</feature>
<feature type="sequence variant" id="VAR_002481" description="In CNSHA1; Stonybrook; class I.">
    <location>
        <begin position="242"/>
        <end position="243"/>
    </location>
</feature>
<feature type="sequence variant" id="VAR_002482" description="In CNSHA1; Wayne; class I.">
    <original>R</original>
    <variation>G</variation>
    <location>
        <position position="257"/>
    </location>
</feature>
<feature type="sequence variant" id="VAR_002483" description="In CNSHA1; Corum; class I." evidence="29">
    <original>E</original>
    <variation>K</variation>
    <location>
        <position position="274"/>
    </location>
</feature>
<feature type="sequence variant" id="VAR_002484" description="In CNSHA1; Wexham; class I." evidence="29">
    <original>S</original>
    <variation>F</variation>
    <location>
        <position position="278"/>
    </location>
</feature>
<feature type="sequence variant" id="VAR_002485" description="In CNSHA1; Chinese-1; class II.">
    <original>T</original>
    <variation>S</variation>
    <location>
        <position position="279"/>
    </location>
</feature>
<feature type="sequence variant" id="VAR_002486" description="In CNSHA1; Seattle; class III; dbSNP:rs137852318." evidence="20">
    <original>D</original>
    <variation>H</variation>
    <location>
        <position position="282"/>
    </location>
</feature>
<feature type="sequence variant" id="VAR_002487" description="In CNSHA1; Montalbano; class III; dbSNP:rs74575103.">
    <original>R</original>
    <variation>H</variation>
    <location>
        <position position="285"/>
    </location>
</feature>
<feature type="sequence variant" id="VAR_002488" description="In CNSHA1; Viangchan/Jammu; class II; dbSNP:rs137852327.">
    <original>V</original>
    <variation>M</variation>
    <location>
        <position position="291"/>
    </location>
</feature>
<feature type="sequence variant" id="VAR_002489" description="In CNSHA1; Kalyan/Kerala; class III; dbSNP:rs137852339." evidence="8">
    <original>E</original>
    <variation>K</variation>
    <location>
        <position position="317"/>
    </location>
</feature>
<feature type="sequence variant" id="VAR_081896" description="In CNSHA1; Bhavnagar; decreased enzyme stability." evidence="23">
    <original>G</original>
    <variation>V</variation>
    <location>
        <position position="321"/>
    </location>
</feature>
<feature type="sequence variant" id="VAR_020535" description="In Rehovot; dbSNP:rs137852347." evidence="4">
    <original>Y</original>
    <variation>H</variation>
    <location>
        <position position="322"/>
    </location>
</feature>
<feature type="sequence variant" id="VAR_002490" description="In CNSHA1; A- type 3; class III; dbSNP:rs76723693.">
    <original>L</original>
    <variation>P</variation>
    <location>
        <position position="323"/>
    </location>
</feature>
<feature type="sequence variant" id="VAR_002491" description="In CNSHA1; Chatham; class III; dbSNP:rs5030869.">
    <original>A</original>
    <variation>T</variation>
    <location>
        <position position="335"/>
    </location>
</feature>
<feature type="sequence variant" id="VAR_002492" description="In Chinese-5; dbSNP:rs137852342.">
    <original>L</original>
    <variation>F</variation>
    <location>
        <position position="342"/>
    </location>
</feature>
<feature type="sequence variant" id="VAR_002493" description="In Ierapetra; class II; dbSNP:rs137852333." evidence="11">
    <original>P</original>
    <variation>S</variation>
    <location>
        <position position="353"/>
    </location>
</feature>
<feature type="sequence variant" id="VAR_002494" description="In CNSHA1; Loma Linda; class I; dbSNP:rs137852329.">
    <original>N</original>
    <variation>K</variation>
    <location>
        <position position="363"/>
    </location>
</feature>
<feature type="sequence variant" id="VAR_002495" description="In CNSHA1; Tomah; class I; dbSNP:rs137852322.">
    <original>C</original>
    <variation>R</variation>
    <location>
        <position position="385"/>
    </location>
</feature>
<feature type="sequence variant" id="VAR_002496" description="In CNSHA1; Iowa; class I; dbSNP:rs137852320.">
    <original>K</original>
    <variation>E</variation>
    <location>
        <position position="386"/>
    </location>
</feature>
<feature type="sequence variant" id="VAR_002498" description="In CNSHA1; Guadajalara and Mount Sinai; class I; dbSNP:rs137852334." evidence="11 35">
    <original>R</original>
    <variation>C</variation>
    <location>
        <position position="387"/>
    </location>
</feature>
<feature type="sequence variant" id="VAR_002497" description="In CNSHA1; Beverly Hills; class I; dbSNP:rs137852321.">
    <original>R</original>
    <variation>H</variation>
    <location>
        <position position="387"/>
    </location>
</feature>
<feature type="sequence variant" id="VAR_002499" description="In CNSHA1; Nashville/Anaheim; class I; dbSNP:rs137852316." evidence="9">
    <original>R</original>
    <variation>H</variation>
    <location>
        <position position="393"/>
    </location>
</feature>
<feature type="sequence variant" id="VAR_002500" description="In CNSHA1; Alhambra; class I; dbSNP:rs137852335." evidence="11">
    <original>V</original>
    <variation>L</variation>
    <location>
        <position position="394"/>
    </location>
</feature>
<feature type="sequence variant" id="VAR_002501" description="In CNSHA1; Bari; class I; dbSNP:rs1557229683." evidence="30">
    <original>P</original>
    <variation>L</variation>
    <location>
        <position position="396"/>
    </location>
</feature>
<feature type="sequence variant" id="VAR_002502" description="In CNSHA1; Puerto Limon; class I; dbSNP:rs137852325.">
    <original>E</original>
    <variation>K</variation>
    <location>
        <position position="398"/>
    </location>
</feature>
<feature type="sequence variant" id="VAR_002503" description="In CNSHA1; Riverside; class I; dbSNP:rs137852323.">
    <original>G</original>
    <variation>C</variation>
    <location>
        <position position="410"/>
    </location>
</feature>
<feature type="sequence variant" id="VAR_002504" description="In CNSHA1; Japan; class I; dbSNP:rs137852336." evidence="11">
    <original>G</original>
    <variation>D</variation>
    <location>
        <position position="410"/>
    </location>
</feature>
<feature type="sequence variant" id="VAR_002505" description="In CNSHA1; Tokyo; class I.">
    <original>E</original>
    <variation>K</variation>
    <location>
        <position position="416"/>
    </location>
</feature>
<feature type="sequence variant" id="VAR_002506" description="In CNSHA1; Pawnee; class I; dbSNP:rs137852337." evidence="11">
    <original>R</original>
    <variation>P</variation>
    <location>
        <position position="439"/>
    </location>
</feature>
<feature type="sequence variant" id="VAR_002507" description="In CNSHA1; Telti/Kobe; class I; dbSNP:rs1557229599.">
    <original>L</original>
    <variation>F</variation>
    <location>
        <position position="440"/>
    </location>
</feature>
<feature type="sequence variant" id="VAR_002508" description="In CNSHA1; Santiago de Cuba; class I; dbSNP:rs137852317.">
    <original>G</original>
    <variation>R</variation>
    <location>
        <position position="447"/>
    </location>
</feature>
<feature type="sequence variant" id="VAR_002509" description="In CNSHA1; Cassano; class II.">
    <original>Q</original>
    <variation>H</variation>
    <location>
        <position position="449"/>
    </location>
</feature>
<feature type="sequence variant" id="VAR_002510" description="In CNSHA1; Chinese-II/Maewo/Union; class II; &lt;1% activity; dbSNP:rs398123546." evidence="7">
    <original>R</original>
    <variation>C</variation>
    <location>
        <position position="454"/>
    </location>
</feature>
<feature type="sequence variant" id="VAR_002511" description="In CNSHA1; Andalus; class I; dbSNP:rs137852324.">
    <original>R</original>
    <variation>H</variation>
    <location>
        <position position="454"/>
    </location>
</feature>
<feature type="sequence variant" id="VAR_002512" description="In CNSHA1; Canton; class II; frequent in China; dbSNP:rs72554665.">
    <original>R</original>
    <variation>L</variation>
    <location>
        <position position="459"/>
    </location>
</feature>
<feature type="sequence variant" id="VAR_002513" description="In CNSHA1; Cosenza; class II; dbSNP:rs72554665.">
    <original>R</original>
    <variation>P</variation>
    <location>
        <position position="459"/>
    </location>
</feature>
<feature type="sequence variant" id="VAR_002514" description="In Kaiping; class II; dbSNP:rs72554664." evidence="36">
    <original>R</original>
    <variation>H</variation>
    <location>
        <position position="463"/>
    </location>
</feature>
<feature type="sequence variant" id="VAR_002515" description="In CNSHA1; Campinas; class I.">
    <original>G</original>
    <variation>V</variation>
    <location>
        <position position="488"/>
    </location>
</feature>
<feature type="mutagenesis site" description="Inhibits catalytic activity. Does not impair dimerization." evidence="16">
    <original>K</original>
    <variation>Q</variation>
    <location>
        <position position="171"/>
    </location>
</feature>
<feature type="mutagenesis site" description="Inhibits catalytic activity. Does not impair dimerization." evidence="16">
    <original>K</original>
    <variation>R</variation>
    <location>
        <position position="171"/>
    </location>
</feature>
<feature type="mutagenesis site" description="Impairs dimerization and reduces catalytic activity." evidence="16">
    <original>K</original>
    <variation>Q</variation>
    <location>
        <position position="386"/>
    </location>
</feature>
<feature type="mutagenesis site" description="Does not impair dimerization and catalytic activity." evidence="16">
    <original>K</original>
    <variation>R</variation>
    <location>
        <position position="386"/>
    </location>
</feature>
<feature type="mutagenesis site" description="Impairs dimerization and reduces catalytic activity in cells under oxidative stress." evidence="16">
    <original>K</original>
    <variation>Q</variation>
    <location>
        <position position="403"/>
    </location>
</feature>
<feature type="mutagenesis site" description="Does not impair dimerization and catalytic activity." evidence="16">
    <original>K</original>
    <variation>R</variation>
    <location>
        <position position="403"/>
    </location>
</feature>
<feature type="sequence conflict" description="In Ref. 1; CAA27309, 2; AAA63175 and 3; AAA52500." evidence="38" ref="1 2 3">
    <original>Q</original>
    <variation>H</variation>
    <location>
        <position position="11"/>
    </location>
</feature>
<feature type="sequence conflict" description="In Ref. 15; AAA52499." evidence="38" ref="15">
    <original>DA</original>
    <variation>EP</variation>
    <location>
        <begin position="435"/>
        <end position="436"/>
    </location>
</feature>
<feature type="strand" evidence="51">
    <location>
        <begin position="32"/>
        <end position="37"/>
    </location>
</feature>
<feature type="turn" evidence="51">
    <location>
        <begin position="38"/>
        <end position="40"/>
    </location>
</feature>
<feature type="helix" evidence="51">
    <location>
        <begin position="42"/>
        <end position="46"/>
    </location>
</feature>
<feature type="helix" evidence="51">
    <location>
        <begin position="48"/>
        <end position="57"/>
    </location>
</feature>
<feature type="strand" evidence="51">
    <location>
        <begin position="63"/>
        <end position="73"/>
    </location>
</feature>
<feature type="helix" evidence="51">
    <location>
        <begin position="77"/>
        <end position="84"/>
    </location>
</feature>
<feature type="helix" evidence="51">
    <location>
        <begin position="85"/>
        <end position="87"/>
    </location>
</feature>
<feature type="helix" evidence="51">
    <location>
        <begin position="92"/>
        <end position="94"/>
    </location>
</feature>
<feature type="helix" evidence="51">
    <location>
        <begin position="95"/>
        <end position="103"/>
    </location>
</feature>
<feature type="strand" evidence="51">
    <location>
        <begin position="105"/>
        <end position="109"/>
    </location>
</feature>
<feature type="helix" evidence="51">
    <location>
        <begin position="115"/>
        <end position="126"/>
    </location>
</feature>
<feature type="turn" evidence="51">
    <location>
        <begin position="127"/>
        <end position="133"/>
    </location>
</feature>
<feature type="strand" evidence="51">
    <location>
        <begin position="135"/>
        <end position="140"/>
    </location>
</feature>
<feature type="helix" evidence="51">
    <location>
        <begin position="144"/>
        <end position="146"/>
    </location>
</feature>
<feature type="helix" evidence="51">
    <location>
        <begin position="147"/>
        <end position="157"/>
    </location>
</feature>
<feature type="strand" evidence="51">
    <location>
        <begin position="161"/>
        <end position="163"/>
    </location>
</feature>
<feature type="strand" evidence="51">
    <location>
        <begin position="165"/>
        <end position="169"/>
    </location>
</feature>
<feature type="helix" evidence="51">
    <location>
        <begin position="177"/>
        <end position="188"/>
    </location>
</feature>
<feature type="helix" evidence="51">
    <location>
        <begin position="193"/>
        <end position="195"/>
    </location>
</feature>
<feature type="strand" evidence="51">
    <location>
        <begin position="196"/>
        <end position="198"/>
    </location>
</feature>
<feature type="helix" evidence="51">
    <location>
        <begin position="201"/>
        <end position="204"/>
    </location>
</feature>
<feature type="helix" evidence="51">
    <location>
        <begin position="206"/>
        <end position="216"/>
    </location>
</feature>
<feature type="helix" evidence="51">
    <location>
        <begin position="219"/>
        <end position="221"/>
    </location>
</feature>
<feature type="strand" evidence="50">
    <location>
        <begin position="222"/>
        <end position="226"/>
    </location>
</feature>
<feature type="turn" evidence="51">
    <location>
        <begin position="227"/>
        <end position="229"/>
    </location>
</feature>
<feature type="strand" evidence="51">
    <location>
        <begin position="230"/>
        <end position="238"/>
    </location>
</feature>
<feature type="helix" evidence="51">
    <location>
        <begin position="247"/>
        <end position="250"/>
    </location>
</feature>
<feature type="turn" evidence="51">
    <location>
        <begin position="251"/>
        <end position="253"/>
    </location>
</feature>
<feature type="helix" evidence="51">
    <location>
        <begin position="254"/>
        <end position="258"/>
    </location>
</feature>
<feature type="turn" evidence="51">
    <location>
        <begin position="259"/>
        <end position="262"/>
    </location>
</feature>
<feature type="helix" evidence="51">
    <location>
        <begin position="263"/>
        <end position="272"/>
    </location>
</feature>
<feature type="strand" evidence="51">
    <location>
        <begin position="277"/>
        <end position="280"/>
    </location>
</feature>
<feature type="helix" evidence="51">
    <location>
        <begin position="281"/>
        <end position="292"/>
    </location>
</feature>
<feature type="helix" evidence="51">
    <location>
        <begin position="300"/>
        <end position="302"/>
    </location>
</feature>
<feature type="strand" evidence="51">
    <location>
        <begin position="303"/>
        <end position="309"/>
    </location>
</feature>
<feature type="strand" evidence="52">
    <location>
        <begin position="312"/>
        <end position="314"/>
    </location>
</feature>
<feature type="helix" evidence="51">
    <location>
        <begin position="316"/>
        <end position="319"/>
    </location>
</feature>
<feature type="helix" evidence="51">
    <location>
        <begin position="322"/>
        <end position="324"/>
    </location>
</feature>
<feature type="strand" evidence="50">
    <location>
        <begin position="326"/>
        <end position="328"/>
    </location>
</feature>
<feature type="strand" evidence="51">
    <location>
        <begin position="336"/>
        <end position="344"/>
    </location>
</feature>
<feature type="turn" evidence="51">
    <location>
        <begin position="347"/>
        <end position="351"/>
    </location>
</feature>
<feature type="strand" evidence="51">
    <location>
        <begin position="353"/>
        <end position="364"/>
    </location>
</feature>
<feature type="strand" evidence="51">
    <location>
        <begin position="366"/>
        <end position="373"/>
    </location>
</feature>
<feature type="strand" evidence="53">
    <location>
        <begin position="381"/>
        <end position="383"/>
    </location>
</feature>
<feature type="strand" evidence="51">
    <location>
        <begin position="389"/>
        <end position="397"/>
    </location>
</feature>
<feature type="strand" evidence="51">
    <location>
        <begin position="399"/>
        <end position="407"/>
    </location>
</feature>
<feature type="strand" evidence="51">
    <location>
        <begin position="409"/>
        <end position="411"/>
    </location>
</feature>
<feature type="strand" evidence="51">
    <location>
        <begin position="414"/>
        <end position="423"/>
    </location>
</feature>
<feature type="helix" evidence="51">
    <location>
        <begin position="424"/>
        <end position="427"/>
    </location>
</feature>
<feature type="turn" evidence="51">
    <location>
        <begin position="428"/>
        <end position="430"/>
    </location>
</feature>
<feature type="helix" evidence="51">
    <location>
        <begin position="436"/>
        <end position="446"/>
    </location>
</feature>
<feature type="helix" evidence="48">
    <location>
        <begin position="449"/>
        <end position="451"/>
    </location>
</feature>
<feature type="helix" evidence="51">
    <location>
        <begin position="455"/>
        <end position="475"/>
    </location>
</feature>
<feature type="strand" evidence="51">
    <location>
        <begin position="480"/>
        <end position="483"/>
    </location>
</feature>
<feature type="strand" evidence="49">
    <location>
        <begin position="486"/>
        <end position="488"/>
    </location>
</feature>
<feature type="helix" evidence="51">
    <location>
        <begin position="490"/>
        <end position="499"/>
    </location>
</feature>
<feature type="modified residue" description="Phosphoserine" evidence="42">
    <location sequence="P11413-3">
        <position position="26"/>
    </location>
</feature>
<protein>
    <recommendedName>
        <fullName>Glucose-6-phosphate 1-dehydrogenase</fullName>
        <shortName>G6PD</shortName>
        <ecNumber evidence="10 16 27">1.1.1.49</ecNumber>
    </recommendedName>
</protein>
<organism>
    <name type="scientific">Homo sapiens</name>
    <name type="common">Human</name>
    <dbReference type="NCBI Taxonomy" id="9606"/>
    <lineage>
        <taxon>Eukaryota</taxon>
        <taxon>Metazoa</taxon>
        <taxon>Chordata</taxon>
        <taxon>Craniata</taxon>
        <taxon>Vertebrata</taxon>
        <taxon>Euteleostomi</taxon>
        <taxon>Mammalia</taxon>
        <taxon>Eutheria</taxon>
        <taxon>Euarchontoglires</taxon>
        <taxon>Primates</taxon>
        <taxon>Haplorrhini</taxon>
        <taxon>Catarrhini</taxon>
        <taxon>Hominidae</taxon>
        <taxon>Homo</taxon>
    </lineage>
</organism>
<accession>P11413</accession>
<accession>D3DWX9</accession>
<accession>Q16000</accession>
<accession>Q16765</accession>
<accession>Q8IU70</accession>
<accession>Q8IU88</accession>
<accession>Q8IUA6</accession>
<accession>Q96PQ2</accession>